<evidence type="ECO:0000250" key="1">
    <source>
        <dbReference type="UniProtKB" id="C0HKE1"/>
    </source>
</evidence>
<evidence type="ECO:0000250" key="2">
    <source>
        <dbReference type="UniProtKB" id="P0C0S5"/>
    </source>
</evidence>
<evidence type="ECO:0000250" key="3">
    <source>
        <dbReference type="UniProtKB" id="P22752"/>
    </source>
</evidence>
<evidence type="ECO:0000256" key="4">
    <source>
        <dbReference type="SAM" id="MobiDB-lite"/>
    </source>
</evidence>
<evidence type="ECO:0000269" key="5">
    <source>
    </source>
</evidence>
<evidence type="ECO:0000269" key="6">
    <source>
    </source>
</evidence>
<evidence type="ECO:0000269" key="7">
    <source>
    </source>
</evidence>
<evidence type="ECO:0000269" key="8">
    <source>
    </source>
</evidence>
<evidence type="ECO:0000269" key="9">
    <source>
    </source>
</evidence>
<evidence type="ECO:0000269" key="10">
    <source>
    </source>
</evidence>
<evidence type="ECO:0000269" key="11">
    <source>
    </source>
</evidence>
<evidence type="ECO:0000269" key="12">
    <source>
    </source>
</evidence>
<evidence type="ECO:0000269" key="13">
    <source>
    </source>
</evidence>
<evidence type="ECO:0000269" key="14">
    <source>
    </source>
</evidence>
<evidence type="ECO:0000269" key="15">
    <source>
    </source>
</evidence>
<evidence type="ECO:0000269" key="16">
    <source>
    </source>
</evidence>
<evidence type="ECO:0000269" key="17">
    <source>
    </source>
</evidence>
<evidence type="ECO:0000269" key="18">
    <source>
    </source>
</evidence>
<evidence type="ECO:0000269" key="19">
    <source>
    </source>
</evidence>
<evidence type="ECO:0000269" key="20">
    <source>
    </source>
</evidence>
<evidence type="ECO:0000269" key="21">
    <source>
    </source>
</evidence>
<evidence type="ECO:0000269" key="22">
    <source>
    </source>
</evidence>
<evidence type="ECO:0000269" key="23">
    <source>
    </source>
</evidence>
<evidence type="ECO:0000269" key="24">
    <source>
    </source>
</evidence>
<evidence type="ECO:0000269" key="25">
    <source>
    </source>
</evidence>
<evidence type="ECO:0000269" key="26">
    <source>
    </source>
</evidence>
<evidence type="ECO:0000269" key="27">
    <source>
    </source>
</evidence>
<evidence type="ECO:0000305" key="28"/>
<evidence type="ECO:0000312" key="29">
    <source>
        <dbReference type="HGNC" id="HGNC:4724"/>
    </source>
</evidence>
<evidence type="ECO:0000312" key="30">
    <source>
        <dbReference type="HGNC" id="HGNC:4734"/>
    </source>
</evidence>
<evidence type="ECO:0007744" key="31">
    <source>
        <dbReference type="PDB" id="5AY8"/>
    </source>
</evidence>
<evidence type="ECO:0007744" key="32">
    <source>
        <dbReference type="PDB" id="7C0M"/>
    </source>
</evidence>
<evidence type="ECO:0007744" key="33">
    <source>
        <dbReference type="PDB" id="7CCQ"/>
    </source>
</evidence>
<evidence type="ECO:0007744" key="34">
    <source>
        <dbReference type="PDB" id="7CCR"/>
    </source>
</evidence>
<evidence type="ECO:0007829" key="35">
    <source>
        <dbReference type="PDB" id="7VZ4"/>
    </source>
</evidence>
<evidence type="ECO:0007829" key="36">
    <source>
        <dbReference type="PDB" id="8UQC"/>
    </source>
</evidence>
<proteinExistence type="evidence at protein level"/>
<protein>
    <recommendedName>
        <fullName>Histone H2A type 1-B/E</fullName>
    </recommendedName>
    <alternativeName>
        <fullName>Histone H2A.2</fullName>
    </alternativeName>
    <alternativeName>
        <fullName>Histone H2A/a</fullName>
    </alternativeName>
    <alternativeName>
        <fullName>Histone H2A/m</fullName>
    </alternativeName>
</protein>
<keyword id="KW-0002">3D-structure</keyword>
<keyword id="KW-0007">Acetylation</keyword>
<keyword id="KW-0158">Chromosome</keyword>
<keyword id="KW-0164">Citrullination</keyword>
<keyword id="KW-0238">DNA-binding</keyword>
<keyword id="KW-0379">Hydroxylation</keyword>
<keyword id="KW-1017">Isopeptide bond</keyword>
<keyword id="KW-0488">Methylation</keyword>
<keyword id="KW-0544">Nucleosome core</keyword>
<keyword id="KW-0539">Nucleus</keyword>
<keyword id="KW-0597">Phosphoprotein</keyword>
<keyword id="KW-1185">Reference proteome</keyword>
<keyword id="KW-0832">Ubl conjugation</keyword>
<feature type="initiator methionine" description="Removed" evidence="5 9 11">
    <location>
        <position position="1"/>
    </location>
</feature>
<feature type="chain" id="PRO_0000055237" description="Histone H2A type 1-B/E">
    <location>
        <begin position="2"/>
        <end position="130"/>
    </location>
</feature>
<feature type="region of interest" description="Disordered" evidence="4">
    <location>
        <begin position="1"/>
        <end position="22"/>
    </location>
</feature>
<feature type="compositionally biased region" description="Basic residues" evidence="4">
    <location>
        <begin position="7"/>
        <end position="19"/>
    </location>
</feature>
<feature type="modified residue" description="N-acetylserine" evidence="5 9 11">
    <location>
        <position position="2"/>
    </location>
</feature>
<feature type="modified residue" description="Phosphoserine; by RPS6KA5" evidence="5 6">
    <location>
        <position position="2"/>
    </location>
</feature>
<feature type="modified residue" description="Citrulline; alternate" evidence="9">
    <location>
        <position position="4"/>
    </location>
</feature>
<feature type="modified residue" description="Symmetric dimethylarginine; by PRMT5; alternate" evidence="1">
    <location>
        <position position="4"/>
    </location>
</feature>
<feature type="modified residue" description="N6-(2-hydroxyisobutyryl)lysine; alternate" evidence="23">
    <location>
        <position position="6"/>
    </location>
</feature>
<feature type="modified residue" description="N6-acetyllysine; alternate" evidence="1">
    <location>
        <position position="6"/>
    </location>
</feature>
<feature type="modified residue" description="N6-(2-hydroxyisobutyryl)lysine; alternate" evidence="23">
    <location>
        <position position="10"/>
    </location>
</feature>
<feature type="modified residue" description="N6-(beta-hydroxybutyryl)lysine; alternate" evidence="26">
    <location>
        <position position="10"/>
    </location>
</feature>
<feature type="modified residue" description="N6-lactoyllysine; alternate" evidence="2">
    <location>
        <position position="10"/>
    </location>
</feature>
<feature type="modified residue" description="N6-succinyllysine; alternate" evidence="18">
    <location>
        <position position="10"/>
    </location>
</feature>
<feature type="modified residue" description="N6-(beta-hydroxybutyryl)lysine; alternate" evidence="26">
    <location>
        <position position="14"/>
    </location>
</feature>
<feature type="modified residue" description="N6-(2-hydroxyisobutyryl)lysine; alternate" evidence="23">
    <location>
        <position position="37"/>
    </location>
</feature>
<feature type="modified residue" description="N6-(beta-hydroxybutyryl)lysine; alternate" evidence="26">
    <location>
        <position position="37"/>
    </location>
</feature>
<feature type="modified residue" description="N6-crotonyllysine; alternate" evidence="17">
    <location>
        <position position="37"/>
    </location>
</feature>
<feature type="modified residue" description="N6-(2-hydroxyisobutyryl)lysine" evidence="23">
    <location>
        <position position="75"/>
    </location>
</feature>
<feature type="modified residue" description="N6-(2-hydroxyisobutyryl)lysine" evidence="23">
    <location>
        <position position="76"/>
    </location>
</feature>
<feature type="modified residue" description="N6-(2-hydroxyisobutyryl)lysine; alternate" evidence="23">
    <location>
        <position position="96"/>
    </location>
</feature>
<feature type="modified residue" description="N6-(beta-hydroxybutyryl)lysine; alternate" evidence="26">
    <location>
        <position position="96"/>
    </location>
</feature>
<feature type="modified residue" description="N6-glutaryllysine; alternate" evidence="27">
    <location>
        <position position="96"/>
    </location>
</feature>
<feature type="modified residue" description="N6-succinyllysine; alternate" evidence="18">
    <location>
        <position position="96"/>
    </location>
</feature>
<feature type="modified residue" description="N5-methylglutamine" evidence="22">
    <location>
        <position position="105"/>
    </location>
</feature>
<feature type="modified residue" description="N6-(2-hydroxyisobutyryl)lysine; alternate" evidence="23">
    <location>
        <position position="119"/>
    </location>
</feature>
<feature type="modified residue" description="N6-(beta-hydroxybutyryl)lysine; alternate" evidence="26">
    <location>
        <position position="119"/>
    </location>
</feature>
<feature type="modified residue" description="N6-crotonyllysine; alternate" evidence="17">
    <location>
        <position position="119"/>
    </location>
</feature>
<feature type="modified residue" description="N6-glutaryllysine; alternate" evidence="27">
    <location>
        <position position="119"/>
    </location>
</feature>
<feature type="modified residue" description="N6-crotonyllysine; alternate" evidence="17">
    <location>
        <position position="120"/>
    </location>
</feature>
<feature type="modified residue" description="N6-glutaryllysine; alternate" evidence="27">
    <location>
        <position position="120"/>
    </location>
</feature>
<feature type="modified residue" description="Phosphothreonine; by DCAF1" evidence="7 21">
    <location>
        <position position="121"/>
    </location>
</feature>
<feature type="modified residue" description="N6-crotonyllysine; alternate" evidence="17">
    <location>
        <position position="126"/>
    </location>
</feature>
<feature type="modified residue" description="N6-glutaryllysine; alternate" evidence="27">
    <location>
        <position position="126"/>
    </location>
</feature>
<feature type="cross-link" description="Glycyl lysine isopeptide (Lys-Gly) (interchain with G-Cter in ubiquitin); alternate" evidence="19 20">
    <location>
        <position position="14"/>
    </location>
</feature>
<feature type="cross-link" description="Glycyl lysine isopeptide (Lys-Gly) (interchain with G-Cter in ubiquitin)" evidence="19 20">
    <location>
        <position position="16"/>
    </location>
</feature>
<feature type="cross-link" description="Glycyl lysine isopeptide (Lys-Gly) (interchain with G-Cter in ubiquitin); alternate" evidence="8 10 12 24">
    <location>
        <position position="120"/>
    </location>
</feature>
<feature type="mutagenesis site" description="Blocks the inhibition of transcription by RPS6KA5/MSK1." evidence="6">
    <original>S</original>
    <variation>A</variation>
    <location>
        <position position="2"/>
    </location>
</feature>
<feature type="sequence conflict" description="In Ref. 1; CAA24951." evidence="28" ref="1">
    <original>GN</original>
    <variation>AH</variation>
    <location>
        <begin position="38"/>
        <end position="39"/>
    </location>
</feature>
<feature type="strand" evidence="36">
    <location>
        <begin position="14"/>
        <end position="16"/>
    </location>
</feature>
<feature type="helix" evidence="35">
    <location>
        <begin position="18"/>
        <end position="21"/>
    </location>
</feature>
<feature type="helix" evidence="35">
    <location>
        <begin position="28"/>
        <end position="36"/>
    </location>
</feature>
<feature type="turn" evidence="35">
    <location>
        <begin position="37"/>
        <end position="39"/>
    </location>
</feature>
<feature type="strand" evidence="35">
    <location>
        <begin position="42"/>
        <end position="44"/>
    </location>
</feature>
<feature type="helix" evidence="35">
    <location>
        <begin position="47"/>
        <end position="73"/>
    </location>
</feature>
<feature type="strand" evidence="35">
    <location>
        <begin position="77"/>
        <end position="79"/>
    </location>
</feature>
<feature type="helix" evidence="35">
    <location>
        <begin position="81"/>
        <end position="89"/>
    </location>
</feature>
<feature type="helix" evidence="35">
    <location>
        <begin position="92"/>
        <end position="97"/>
    </location>
</feature>
<feature type="turn" evidence="35">
    <location>
        <begin position="98"/>
        <end position="100"/>
    </location>
</feature>
<feature type="strand" evidence="35">
    <location>
        <begin position="101"/>
        <end position="103"/>
    </location>
</feature>
<feature type="helix" evidence="35">
    <location>
        <begin position="114"/>
        <end position="116"/>
    </location>
</feature>
<comment type="function">
    <text>Core component of nucleosome. Nucleosomes wrap and compact DNA into chromatin, limiting DNA accessibility to the cellular machineries which require DNA as a template. Histones thereby play a central role in transcription regulation, DNA repair, DNA replication and chromosomal stability. DNA accessibility is regulated via a complex set of post-translational modifications of histones, also called histone code, and nucleosome remodeling.</text>
</comment>
<comment type="subunit">
    <text>The nucleosome is a histone octamer containing two molecules each of H2A, H2B, H3 and H4 assembled in one H3-H4 heterotetramer and two H2A-H2B heterodimers. The octamer wraps approximately 147 bp of DNA.</text>
</comment>
<comment type="interaction">
    <interactant intactId="EBI-358971">
        <id>P04908</id>
    </interactant>
    <interactant intactId="EBI-6150252">
        <id>P06899</id>
        <label>H2BC11</label>
    </interactant>
    <organismsDiffer>false</organismsDiffer>
    <experiments>13</experiments>
</comment>
<comment type="interaction">
    <interactant intactId="EBI-358971">
        <id>P04908</id>
    </interactant>
    <interactant intactId="EBI-12142839">
        <id>U3KQK0</id>
        <label>H2BC15</label>
    </interactant>
    <organismsDiffer>false</organismsDiffer>
    <experiments>3</experiments>
</comment>
<comment type="interaction">
    <interactant intactId="EBI-358971">
        <id>P04908</id>
    </interactant>
    <interactant intactId="EBI-358900">
        <id>Q16695</id>
        <label>H3-4</label>
    </interactant>
    <organismsDiffer>false</organismsDiffer>
    <experiments>2</experiments>
</comment>
<comment type="interaction">
    <interactant intactId="EBI-358971">
        <id>P04908</id>
    </interactant>
    <interactant intactId="EBI-302023">
        <id>P62805</id>
        <label>H4C9</label>
    </interactant>
    <organismsDiffer>false</organismsDiffer>
    <experiments>12</experiments>
</comment>
<comment type="interaction">
    <interactant intactId="EBI-358971">
        <id>P04908</id>
    </interactant>
    <interactant intactId="EBI-2880687">
        <id>Q5SSJ5</id>
        <label>HP1BP3</label>
    </interactant>
    <organismsDiffer>false</organismsDiffer>
    <experiments>2</experiments>
</comment>
<comment type="subcellular location">
    <subcellularLocation>
        <location>Nucleus</location>
    </subcellularLocation>
    <subcellularLocation>
        <location>Chromosome</location>
    </subcellularLocation>
</comment>
<comment type="PTM">
    <text evidence="9">Deiminated on Arg-4 in granulocytes upon calcium entry.</text>
</comment>
<comment type="PTM">
    <text evidence="8 10 12 13 14 15 16 19 20 22 24 25">Monoubiquitination of Lys-120 (H2AK119Ub) by RING1, TRIM37 and RNF2/RING2 complex gives a specific tag for epigenetic transcriptional repression and participates in X chromosome inactivation of female mammals. It is involved in the initiation of both imprinted and random X inactivation. Ubiquitinated H2A is enriched in inactive X chromosome chromatin. Ubiquitination of H2A functions downstream of methylation of 'Lys-27' of histone H3 (H3K27me). H2AK119Ub by RNF2/RING2 can also be induced by ultraviolet and may be involved in DNA repair. Monoubiquitination of Lys-120 (H2AK119Ub) by TRIM37 may promote transformation of cells in a number of breast cancers (PubMed:25470042). Following DNA double-strand breaks (DSBs), it is ubiquitinated through 'Lys-63' linkage of ubiquitin moieties by the E2 ligase UBE2N and the E3 ligases RNF8 and RNF168, leading to the recruitment of repair proteins to sites of DNA damage. Ubiquitination at Lys-14 and Lys-16 (H2AK13Ub and H2AK15Ub, respectively) in response to DNA damage is initiated by RNF168 that mediates monoubiquitination at these 2 sites, and 'Lys-63'-linked ubiquitin are then conjugated to monoubiquitin; RNF8 is able to extend 'Lys-63'-linked ubiquitin chains in vitro. Deubiquitinated by USP51 at Lys-14 and Lys-16 (H2AK13Ub and H2AK15Ub, respectively) after damaged DNA is repaired (PubMed:27083998). H2AK119Ub and ionizing radiation-induced 'Lys-63'-linked ubiquitination (H2AK13Ub and H2AK15Ub) are distinct events.</text>
</comment>
<comment type="PTM">
    <text evidence="5 6 7 9 11 21">Phosphorylation on Ser-2 (H2AS1ph) is enhanced during mitosis. Phosphorylation on Ser-2 by RPS6KA5/MSK1 directly represses transcription. Acetylation of H3 inhibits Ser-2 phosphorylation by RPS6KA5/MSK1. Phosphorylation at Thr-121 (H2AT120ph) by DCAF1 is present in the regulatory region of many tumor suppresor genes and down-regulates their transcription.</text>
</comment>
<comment type="PTM">
    <text evidence="22">Glutamine methylation at Gln-105 (H2AQ104me) by FBL is specifically dedicated to polymerase I. It is present at 35S ribosomal DNA locus and impairs binding of the FACT complex (PubMed:24352239).</text>
</comment>
<comment type="PTM">
    <text evidence="3">Symmetric dimethylation on Arg-4 by the PRDM1/PRMT5 complex may play a crucial role in the germ-cell lineage.</text>
</comment>
<comment type="PTM">
    <text evidence="17">Crotonylation (Kcr) is specifically present in male germ cells and marks testis-specific genes in post-meiotic cells, including X-linked genes that escape sex chromosome inactivation in haploid cells. Crotonylation marks active promoters and enhancers and confers resistance to transcriptional repressors. It is also associated with post-meiotically activated genes on autosomes.</text>
</comment>
<comment type="PTM">
    <text evidence="2">Lactylated in macrophages by EP300/P300 by using lactoyl-CoA directly derived from endogenous or exogenous lactate, leading to stimulates gene transcription.</text>
</comment>
<comment type="mass spectrometry">
    <text>Monoisotopic with N-acetylserine.</text>
</comment>
<comment type="similarity">
    <text evidence="28">Belongs to the histone H2A family.</text>
</comment>
<sequence>MSGRGKQGGKARAKAKTRSSRAGLQFPVGRVHRLLRKGNYSERVGAGAPVYLAAVLEYLTAEILELAGNAARDNKKTRIIPRHLQLAIRNDEELNKLLGRVTIAQGGVLPNIQAVLLPKKTESHHKAKGK</sequence>
<dbReference type="EMBL" id="X00089">
    <property type="protein sequence ID" value="CAA24951.1"/>
    <property type="molecule type" value="Genomic_DNA"/>
</dbReference>
<dbReference type="EMBL" id="M60752">
    <property type="protein sequence ID" value="AAA63191.1"/>
    <property type="molecule type" value="Genomic_DNA"/>
</dbReference>
<dbReference type="EMBL" id="Z83741">
    <property type="protein sequence ID" value="CAB06036.1"/>
    <property type="molecule type" value="Genomic_DNA"/>
</dbReference>
<dbReference type="EMBL" id="AY131983">
    <property type="protein sequence ID" value="AAN59964.1"/>
    <property type="molecule type" value="Genomic_DNA"/>
</dbReference>
<dbReference type="EMBL" id="AY131986">
    <property type="protein sequence ID" value="AAN59967.1"/>
    <property type="molecule type" value="Genomic_DNA"/>
</dbReference>
<dbReference type="EMBL" id="AL031777">
    <property type="status" value="NOT_ANNOTATED_CDS"/>
    <property type="molecule type" value="Genomic_DNA"/>
</dbReference>
<dbReference type="EMBL" id="BC093836">
    <property type="protein sequence ID" value="AAH93836.1"/>
    <property type="molecule type" value="mRNA"/>
</dbReference>
<dbReference type="EMBL" id="BC093862">
    <property type="protein sequence ID" value="AAH93862.1"/>
    <property type="molecule type" value="mRNA"/>
</dbReference>
<dbReference type="CCDS" id="CCDS4574.1"/>
<dbReference type="CCDS" id="CCDS4595.1"/>
<dbReference type="PIR" id="B26318">
    <property type="entry name" value="HSHUA5"/>
</dbReference>
<dbReference type="PIR" id="G40335">
    <property type="entry name" value="G40335"/>
</dbReference>
<dbReference type="RefSeq" id="NP_003504.2">
    <property type="nucleotide sequence ID" value="NM_003513.2"/>
</dbReference>
<dbReference type="RefSeq" id="NP_066390.1">
    <property type="nucleotide sequence ID" value="NM_021052.2"/>
</dbReference>
<dbReference type="PDB" id="2CV5">
    <property type="method" value="X-ray"/>
    <property type="resolution" value="2.50 A"/>
    <property type="chains" value="C/G=1-130"/>
</dbReference>
<dbReference type="PDB" id="2RVQ">
    <property type="method" value="NMR"/>
    <property type="chains" value="C=1-130"/>
</dbReference>
<dbReference type="PDB" id="3A6N">
    <property type="method" value="X-ray"/>
    <property type="resolution" value="2.70 A"/>
    <property type="chains" value="C/G=1-130"/>
</dbReference>
<dbReference type="PDB" id="3AFA">
    <property type="method" value="X-ray"/>
    <property type="resolution" value="2.50 A"/>
    <property type="chains" value="C/G=1-130"/>
</dbReference>
<dbReference type="PDB" id="3AN2">
    <property type="method" value="X-ray"/>
    <property type="resolution" value="3.60 A"/>
    <property type="chains" value="C/G=1-130"/>
</dbReference>
<dbReference type="PDB" id="3AV1">
    <property type="method" value="X-ray"/>
    <property type="resolution" value="2.50 A"/>
    <property type="chains" value="C/G=1-130"/>
</dbReference>
<dbReference type="PDB" id="3AV2">
    <property type="method" value="X-ray"/>
    <property type="resolution" value="2.80 A"/>
    <property type="chains" value="C/G=1-130"/>
</dbReference>
<dbReference type="PDB" id="3AYW">
    <property type="method" value="X-ray"/>
    <property type="resolution" value="2.90 A"/>
    <property type="chains" value="C/G=1-130"/>
</dbReference>
<dbReference type="PDB" id="3AZE">
    <property type="method" value="X-ray"/>
    <property type="resolution" value="3.00 A"/>
    <property type="chains" value="C/G=1-130"/>
</dbReference>
<dbReference type="PDB" id="3AZF">
    <property type="method" value="X-ray"/>
    <property type="resolution" value="2.70 A"/>
    <property type="chains" value="C/G=1-130"/>
</dbReference>
<dbReference type="PDB" id="3AZG">
    <property type="method" value="X-ray"/>
    <property type="resolution" value="2.40 A"/>
    <property type="chains" value="C/G=1-130"/>
</dbReference>
<dbReference type="PDB" id="3AZH">
    <property type="method" value="X-ray"/>
    <property type="resolution" value="3.49 A"/>
    <property type="chains" value="C/G=1-130"/>
</dbReference>
<dbReference type="PDB" id="3AZI">
    <property type="method" value="X-ray"/>
    <property type="resolution" value="2.70 A"/>
    <property type="chains" value="C/G=1-130"/>
</dbReference>
<dbReference type="PDB" id="3AZJ">
    <property type="method" value="X-ray"/>
    <property type="resolution" value="2.89 A"/>
    <property type="chains" value="C/G=1-130"/>
</dbReference>
<dbReference type="PDB" id="3AZK">
    <property type="method" value="X-ray"/>
    <property type="resolution" value="3.20 A"/>
    <property type="chains" value="C/G=1-130"/>
</dbReference>
<dbReference type="PDB" id="3AZL">
    <property type="method" value="X-ray"/>
    <property type="resolution" value="2.70 A"/>
    <property type="chains" value="C/G=1-130"/>
</dbReference>
<dbReference type="PDB" id="3AZM">
    <property type="method" value="X-ray"/>
    <property type="resolution" value="2.89 A"/>
    <property type="chains" value="C/G=1-130"/>
</dbReference>
<dbReference type="PDB" id="3AZN">
    <property type="method" value="X-ray"/>
    <property type="resolution" value="3.00 A"/>
    <property type="chains" value="C/G=1-130"/>
</dbReference>
<dbReference type="PDB" id="3W96">
    <property type="method" value="X-ray"/>
    <property type="resolution" value="3.00 A"/>
    <property type="chains" value="C/G=11-130"/>
</dbReference>
<dbReference type="PDB" id="3W97">
    <property type="method" value="X-ray"/>
    <property type="resolution" value="3.20 A"/>
    <property type="chains" value="C/G=1-130"/>
</dbReference>
<dbReference type="PDB" id="3W98">
    <property type="method" value="X-ray"/>
    <property type="resolution" value="3.42 A"/>
    <property type="chains" value="C/G=1-130"/>
</dbReference>
<dbReference type="PDB" id="3W99">
    <property type="method" value="X-ray"/>
    <property type="resolution" value="3.00 A"/>
    <property type="chains" value="C/G=1-130"/>
</dbReference>
<dbReference type="PDB" id="3WKJ">
    <property type="method" value="X-ray"/>
    <property type="resolution" value="2.80 A"/>
    <property type="chains" value="C/G=1-130"/>
</dbReference>
<dbReference type="PDB" id="3WTP">
    <property type="method" value="X-ray"/>
    <property type="resolution" value="2.67 A"/>
    <property type="chains" value="C/G=1-130"/>
</dbReference>
<dbReference type="PDB" id="3X1S">
    <property type="method" value="X-ray"/>
    <property type="resolution" value="2.81 A"/>
    <property type="chains" value="C/G=2-130"/>
</dbReference>
<dbReference type="PDB" id="3X1V">
    <property type="method" value="X-ray"/>
    <property type="resolution" value="2.92 A"/>
    <property type="chains" value="C/G=2-130"/>
</dbReference>
<dbReference type="PDB" id="4YM5">
    <property type="method" value="X-ray"/>
    <property type="resolution" value="4.00 A"/>
    <property type="chains" value="C/G=1-130"/>
</dbReference>
<dbReference type="PDB" id="4YM6">
    <property type="method" value="X-ray"/>
    <property type="resolution" value="3.51 A"/>
    <property type="chains" value="C/G=1-130"/>
</dbReference>
<dbReference type="PDB" id="4Z5T">
    <property type="method" value="X-ray"/>
    <property type="resolution" value="2.80 A"/>
    <property type="chains" value="C/G=1-130"/>
</dbReference>
<dbReference type="PDB" id="5AV5">
    <property type="method" value="X-ray"/>
    <property type="resolution" value="2.40 A"/>
    <property type="chains" value="C/G=1-130"/>
</dbReference>
<dbReference type="PDB" id="5AV6">
    <property type="method" value="X-ray"/>
    <property type="resolution" value="2.20 A"/>
    <property type="chains" value="C/G=1-130"/>
</dbReference>
<dbReference type="PDB" id="5AV8">
    <property type="method" value="X-ray"/>
    <property type="resolution" value="2.20 A"/>
    <property type="chains" value="C/G=1-130"/>
</dbReference>
<dbReference type="PDB" id="5AV9">
    <property type="method" value="X-ray"/>
    <property type="resolution" value="2.20 A"/>
    <property type="chains" value="C/G=1-130"/>
</dbReference>
<dbReference type="PDB" id="5AVB">
    <property type="method" value="X-ray"/>
    <property type="resolution" value="2.40 A"/>
    <property type="chains" value="C/G=1-130"/>
</dbReference>
<dbReference type="PDB" id="5AVC">
    <property type="method" value="X-ray"/>
    <property type="resolution" value="2.40 A"/>
    <property type="chains" value="C/G=1-130"/>
</dbReference>
<dbReference type="PDB" id="5AY8">
    <property type="method" value="X-ray"/>
    <property type="resolution" value="2.80 A"/>
    <property type="chains" value="C/G=1-130"/>
</dbReference>
<dbReference type="PDB" id="5B0Y">
    <property type="method" value="X-ray"/>
    <property type="resolution" value="2.56 A"/>
    <property type="chains" value="C/G=1-130"/>
</dbReference>
<dbReference type="PDB" id="5B0Z">
    <property type="method" value="X-ray"/>
    <property type="resolution" value="1.99 A"/>
    <property type="chains" value="C/G=1-130"/>
</dbReference>
<dbReference type="PDB" id="5B24">
    <property type="method" value="X-ray"/>
    <property type="resolution" value="3.60 A"/>
    <property type="chains" value="C/G=1-130"/>
</dbReference>
<dbReference type="PDB" id="5B2I">
    <property type="method" value="X-ray"/>
    <property type="resolution" value="3.00 A"/>
    <property type="chains" value="C/G=1-130"/>
</dbReference>
<dbReference type="PDB" id="5B2J">
    <property type="method" value="X-ray"/>
    <property type="resolution" value="2.60 A"/>
    <property type="chains" value="C/G=1-130"/>
</dbReference>
<dbReference type="PDB" id="5B31">
    <property type="method" value="X-ray"/>
    <property type="resolution" value="2.20 A"/>
    <property type="chains" value="C=1-130"/>
</dbReference>
<dbReference type="PDB" id="5B32">
    <property type="method" value="X-ray"/>
    <property type="resolution" value="2.35 A"/>
    <property type="chains" value="C=1-130"/>
</dbReference>
<dbReference type="PDB" id="5B40">
    <property type="method" value="X-ray"/>
    <property type="resolution" value="3.33 A"/>
    <property type="chains" value="C/G=1-130"/>
</dbReference>
<dbReference type="PDB" id="5CPI">
    <property type="method" value="X-ray"/>
    <property type="resolution" value="2.90 A"/>
    <property type="chains" value="C/G=1-130"/>
</dbReference>
<dbReference type="PDB" id="5CPJ">
    <property type="method" value="X-ray"/>
    <property type="resolution" value="3.15 A"/>
    <property type="chains" value="C/G=1-130"/>
</dbReference>
<dbReference type="PDB" id="5CPK">
    <property type="method" value="X-ray"/>
    <property type="resolution" value="2.63 A"/>
    <property type="chains" value="C/G=1-130"/>
</dbReference>
<dbReference type="PDB" id="5GSE">
    <property type="method" value="X-ray"/>
    <property type="resolution" value="3.14 A"/>
    <property type="chains" value="C/G/M=1-130"/>
</dbReference>
<dbReference type="PDB" id="5GTC">
    <property type="method" value="X-ray"/>
    <property type="resolution" value="2.70 A"/>
    <property type="chains" value="C/G=1-130"/>
</dbReference>
<dbReference type="PDB" id="5GXQ">
    <property type="method" value="X-ray"/>
    <property type="resolution" value="2.85 A"/>
    <property type="chains" value="C/G=1-130"/>
</dbReference>
<dbReference type="PDB" id="5JRG">
    <property type="method" value="X-ray"/>
    <property type="resolution" value="2.50 A"/>
    <property type="chains" value="C/G=1-130"/>
</dbReference>
<dbReference type="PDB" id="5X7X">
    <property type="method" value="X-ray"/>
    <property type="resolution" value="2.18 A"/>
    <property type="chains" value="C/G=1-130"/>
</dbReference>
<dbReference type="PDB" id="5XF3">
    <property type="method" value="X-ray"/>
    <property type="resolution" value="2.60 A"/>
    <property type="chains" value="C/G=1-130"/>
</dbReference>
<dbReference type="PDB" id="5XF4">
    <property type="method" value="X-ray"/>
    <property type="resolution" value="2.87 A"/>
    <property type="chains" value="C/G=1-130"/>
</dbReference>
<dbReference type="PDB" id="5XF5">
    <property type="method" value="X-ray"/>
    <property type="resolution" value="2.82 A"/>
    <property type="chains" value="C/G=1-130"/>
</dbReference>
<dbReference type="PDB" id="5Y0C">
    <property type="method" value="X-ray"/>
    <property type="resolution" value="2.09 A"/>
    <property type="chains" value="C/G=1-130"/>
</dbReference>
<dbReference type="PDB" id="5Y0D">
    <property type="method" value="X-ray"/>
    <property type="resolution" value="1.99 A"/>
    <property type="chains" value="C/G=1-130"/>
</dbReference>
<dbReference type="PDB" id="5Z23">
    <property type="method" value="X-ray"/>
    <property type="resolution" value="2.73 A"/>
    <property type="chains" value="C/G=1-130"/>
</dbReference>
<dbReference type="PDB" id="5ZBX">
    <property type="method" value="X-ray"/>
    <property type="resolution" value="2.58 A"/>
    <property type="chains" value="C/G=1-130"/>
</dbReference>
<dbReference type="PDB" id="6A5L">
    <property type="method" value="EM"/>
    <property type="resolution" value="5.60 A"/>
    <property type="chains" value="c/g=1-130"/>
</dbReference>
<dbReference type="PDB" id="6A5O">
    <property type="method" value="EM"/>
    <property type="resolution" value="9.90 A"/>
    <property type="chains" value="c/g=1-130"/>
</dbReference>
<dbReference type="PDB" id="6A5P">
    <property type="method" value="EM"/>
    <property type="resolution" value="7.00 A"/>
    <property type="chains" value="c/g=1-130"/>
</dbReference>
<dbReference type="PDB" id="6A5R">
    <property type="method" value="EM"/>
    <property type="resolution" value="8.70 A"/>
    <property type="chains" value="c/g=1-130"/>
</dbReference>
<dbReference type="PDB" id="6A5T">
    <property type="method" value="EM"/>
    <property type="resolution" value="6.70 A"/>
    <property type="chains" value="c/g=1-130"/>
</dbReference>
<dbReference type="PDB" id="6A5U">
    <property type="method" value="EM"/>
    <property type="resolution" value="7.60 A"/>
    <property type="chains" value="c/g=1-130"/>
</dbReference>
<dbReference type="PDB" id="6ACL">
    <property type="method" value="X-ray"/>
    <property type="resolution" value="1.92 A"/>
    <property type="chains" value="B=93-102"/>
</dbReference>
<dbReference type="PDB" id="6AEE">
    <property type="method" value="X-ray"/>
    <property type="resolution" value="3.30 A"/>
    <property type="chains" value="C/F=78-86"/>
</dbReference>
<dbReference type="PDB" id="6BUZ">
    <property type="method" value="EM"/>
    <property type="resolution" value="3.92 A"/>
    <property type="chains" value="C/G=1-130"/>
</dbReference>
<dbReference type="PDB" id="6E0C">
    <property type="method" value="EM"/>
    <property type="resolution" value="2.63 A"/>
    <property type="chains" value="C/G=1-130"/>
</dbReference>
<dbReference type="PDB" id="6E0P">
    <property type="method" value="EM"/>
    <property type="resolution" value="2.60 A"/>
    <property type="chains" value="C/G=1-130"/>
</dbReference>
<dbReference type="PDB" id="6HKT">
    <property type="method" value="X-ray"/>
    <property type="resolution" value="9.70 A"/>
    <property type="chains" value="0/2/C/G/M/Q/W/c/g/m/q/w=1-130"/>
</dbReference>
<dbReference type="PDB" id="6HTS">
    <property type="method" value="EM"/>
    <property type="resolution" value="4.80 A"/>
    <property type="chains" value="K/O=1-130"/>
</dbReference>
<dbReference type="PDB" id="6INQ">
    <property type="method" value="EM"/>
    <property type="resolution" value="6.90 A"/>
    <property type="chains" value="c/g=1-130"/>
</dbReference>
<dbReference type="PDB" id="6IPU">
    <property type="method" value="X-ray"/>
    <property type="resolution" value="1.99 A"/>
    <property type="chains" value="C/G=14-120"/>
</dbReference>
<dbReference type="PDB" id="6IQ4">
    <property type="method" value="X-ray"/>
    <property type="resolution" value="2.25 A"/>
    <property type="chains" value="C/G=15-120"/>
</dbReference>
<dbReference type="PDB" id="6IR9">
    <property type="method" value="EM"/>
    <property type="resolution" value="3.80 A"/>
    <property type="chains" value="c/g=1-130"/>
</dbReference>
<dbReference type="PDB" id="6J4W">
    <property type="method" value="EM"/>
    <property type="resolution" value="7.90 A"/>
    <property type="chains" value="c/g=1-130"/>
</dbReference>
<dbReference type="PDB" id="6J4X">
    <property type="method" value="EM"/>
    <property type="resolution" value="4.30 A"/>
    <property type="chains" value="c/g=1-130"/>
</dbReference>
<dbReference type="PDB" id="6J4Y">
    <property type="method" value="EM"/>
    <property type="resolution" value="4.30 A"/>
    <property type="chains" value="c/g=1-130"/>
</dbReference>
<dbReference type="PDB" id="6J4Z">
    <property type="method" value="EM"/>
    <property type="resolution" value="4.10 A"/>
    <property type="chains" value="c/g=1-130"/>
</dbReference>
<dbReference type="PDB" id="6J50">
    <property type="method" value="EM"/>
    <property type="resolution" value="4.70 A"/>
    <property type="chains" value="c/g=1-130"/>
</dbReference>
<dbReference type="PDB" id="6J51">
    <property type="method" value="EM"/>
    <property type="resolution" value="4.20 A"/>
    <property type="chains" value="c/g=1-130"/>
</dbReference>
<dbReference type="PDB" id="6JR0">
    <property type="method" value="X-ray"/>
    <property type="resolution" value="2.50 A"/>
    <property type="chains" value="C/G=1-130"/>
</dbReference>
<dbReference type="PDB" id="6JR1">
    <property type="method" value="X-ray"/>
    <property type="resolution" value="2.40 A"/>
    <property type="chains" value="C/G=1-130"/>
</dbReference>
<dbReference type="PDB" id="6JXD">
    <property type="method" value="X-ray"/>
    <property type="resolution" value="2.25 A"/>
    <property type="chains" value="C/G=14-119"/>
</dbReference>
<dbReference type="PDB" id="6KE9">
    <property type="method" value="X-ray"/>
    <property type="resolution" value="2.22 A"/>
    <property type="chains" value="C/G=15-119"/>
</dbReference>
<dbReference type="PDB" id="6KXV">
    <property type="method" value="X-ray"/>
    <property type="resolution" value="3.63 A"/>
    <property type="chains" value="C/G=1-130"/>
</dbReference>
<dbReference type="PDB" id="6L49">
    <property type="method" value="EM"/>
    <property type="resolution" value="18.90 A"/>
    <property type="chains" value="C/G/M/Q/U/Y=1-130"/>
</dbReference>
<dbReference type="PDB" id="6L4A">
    <property type="method" value="EM"/>
    <property type="resolution" value="12.30 A"/>
    <property type="chains" value="C/G/M/Q/U/Y=1-130"/>
</dbReference>
<dbReference type="PDB" id="6L9H">
    <property type="method" value="X-ray"/>
    <property type="resolution" value="2.60 A"/>
    <property type="chains" value="C/G=15-119"/>
</dbReference>
<dbReference type="PDB" id="6L9Z">
    <property type="method" value="X-ray"/>
    <property type="resolution" value="2.50 A"/>
    <property type="chains" value="C/G/M/Q=1-130"/>
</dbReference>
<dbReference type="PDB" id="6LA2">
    <property type="method" value="X-ray"/>
    <property type="resolution" value="3.89 A"/>
    <property type="chains" value="C/G/M/Q/W/a/g/k=1-130"/>
</dbReference>
<dbReference type="PDB" id="6LA8">
    <property type="method" value="X-ray"/>
    <property type="resolution" value="3.40 A"/>
    <property type="chains" value="C/G/M/Q=1-130"/>
</dbReference>
<dbReference type="PDB" id="6LA9">
    <property type="method" value="X-ray"/>
    <property type="resolution" value="3.70 A"/>
    <property type="chains" value="C/G/M/Q=1-130"/>
</dbReference>
<dbReference type="PDB" id="6LAB">
    <property type="method" value="X-ray"/>
    <property type="resolution" value="3.20 A"/>
    <property type="chains" value="C/G/M/Q=1-130"/>
</dbReference>
<dbReference type="PDB" id="6LE9">
    <property type="method" value="X-ray"/>
    <property type="resolution" value="2.60 A"/>
    <property type="chains" value="C/G=15-119"/>
</dbReference>
<dbReference type="PDB" id="6LER">
    <property type="method" value="X-ray"/>
    <property type="resolution" value="3.00 A"/>
    <property type="chains" value="C/G/M/Q=1-130"/>
</dbReference>
<dbReference type="PDB" id="6M3V">
    <property type="method" value="X-ray"/>
    <property type="resolution" value="4.60 A"/>
    <property type="chains" value="C/G/M/Q=1-130"/>
</dbReference>
<dbReference type="PDB" id="6M44">
    <property type="method" value="X-ray"/>
    <property type="resolution" value="3.81 A"/>
    <property type="chains" value="C/G/M/Q=1-130"/>
</dbReference>
<dbReference type="PDB" id="6O1D">
    <property type="method" value="EM"/>
    <property type="resolution" value="3.40 A"/>
    <property type="chains" value="C/G=1-130"/>
</dbReference>
<dbReference type="PDB" id="6R8Y">
    <property type="method" value="EM"/>
    <property type="resolution" value="4.30 A"/>
    <property type="chains" value="C/G=1-130"/>
</dbReference>
<dbReference type="PDB" id="6R8Z">
    <property type="method" value="EM"/>
    <property type="resolution" value="3.90 A"/>
    <property type="chains" value="C/G=1-130"/>
</dbReference>
<dbReference type="PDB" id="6R90">
    <property type="method" value="EM"/>
    <property type="resolution" value="4.50 A"/>
    <property type="chains" value="C/G=1-130"/>
</dbReference>
<dbReference type="PDB" id="6R91">
    <property type="method" value="EM"/>
    <property type="resolution" value="4.10 A"/>
    <property type="chains" value="C/G=1-130"/>
</dbReference>
<dbReference type="PDB" id="6R92">
    <property type="method" value="EM"/>
    <property type="resolution" value="4.80 A"/>
    <property type="chains" value="C/G=1-130"/>
</dbReference>
<dbReference type="PDB" id="6R93">
    <property type="method" value="EM"/>
    <property type="resolution" value="4.00 A"/>
    <property type="chains" value="C/G=1-130"/>
</dbReference>
<dbReference type="PDB" id="6R94">
    <property type="method" value="EM"/>
    <property type="resolution" value="3.50 A"/>
    <property type="chains" value="C/G=1-130"/>
</dbReference>
<dbReference type="PDB" id="6T79">
    <property type="method" value="EM"/>
    <property type="resolution" value="3.20 A"/>
    <property type="chains" value="C/G=1-130"/>
</dbReference>
<dbReference type="PDB" id="6T7A">
    <property type="method" value="EM"/>
    <property type="resolution" value="3.70 A"/>
    <property type="chains" value="C/G=1-130"/>
</dbReference>
<dbReference type="PDB" id="6T7B">
    <property type="method" value="EM"/>
    <property type="resolution" value="5.10 A"/>
    <property type="chains" value="C/G=1-130"/>
</dbReference>
<dbReference type="PDB" id="6T7C">
    <property type="method" value="EM"/>
    <property type="resolution" value="4.00 A"/>
    <property type="chains" value="C/G=1-130"/>
</dbReference>
<dbReference type="PDB" id="6T7D">
    <property type="method" value="EM"/>
    <property type="resolution" value="4.40 A"/>
    <property type="chains" value="C/G=1-130"/>
</dbReference>
<dbReference type="PDB" id="6T90">
    <property type="method" value="EM"/>
    <property type="resolution" value="3.05 A"/>
    <property type="chains" value="C/G=1-130"/>
</dbReference>
<dbReference type="PDB" id="6T93">
    <property type="method" value="EM"/>
    <property type="resolution" value="3.49 A"/>
    <property type="chains" value="C/G=1-130"/>
</dbReference>
<dbReference type="PDB" id="6USJ">
    <property type="method" value="EM"/>
    <property type="resolution" value="10.50 A"/>
    <property type="chains" value="C/G/M/Q=1-130"/>
</dbReference>
<dbReference type="PDB" id="6V2K">
    <property type="method" value="X-ray"/>
    <property type="resolution" value="2.60 A"/>
    <property type="chains" value="C/G=1-130"/>
</dbReference>
<dbReference type="PDB" id="6V92">
    <property type="method" value="EM"/>
    <property type="resolution" value="20.00 A"/>
    <property type="chains" value="c/g=1-130"/>
</dbReference>
<dbReference type="PDB" id="6YOV">
    <property type="method" value="EM"/>
    <property type="resolution" value="3.42 A"/>
    <property type="chains" value="C/G=1-130"/>
</dbReference>
<dbReference type="PDB" id="7BWD">
    <property type="method" value="EM"/>
    <property type="resolution" value="4.32 A"/>
    <property type="chains" value="C/G=2-130"/>
</dbReference>
<dbReference type="PDB" id="7BXT">
    <property type="method" value="EM"/>
    <property type="resolution" value="4.20 A"/>
    <property type="chains" value="C/G=2-130"/>
</dbReference>
<dbReference type="PDB" id="7BY0">
    <property type="method" value="EM"/>
    <property type="resolution" value="4.50 A"/>
    <property type="chains" value="C/G=1-130"/>
</dbReference>
<dbReference type="PDB" id="7C0M">
    <property type="method" value="EM"/>
    <property type="resolution" value="3.90 A"/>
    <property type="chains" value="C/G/c/g=2-130"/>
</dbReference>
<dbReference type="PDB" id="7CCQ">
    <property type="method" value="EM"/>
    <property type="resolution" value="3.80 A"/>
    <property type="chains" value="C/G=16-118"/>
</dbReference>
<dbReference type="PDB" id="7CCR">
    <property type="method" value="EM"/>
    <property type="resolution" value="4.90 A"/>
    <property type="chains" value="C/G/N/R=16-118"/>
</dbReference>
<dbReference type="PDB" id="7COW">
    <property type="method" value="X-ray"/>
    <property type="resolution" value="2.86 A"/>
    <property type="chains" value="C/G/M/Q=1-130"/>
</dbReference>
<dbReference type="PDB" id="7D1Z">
    <property type="method" value="EM"/>
    <property type="resolution" value="3.15 A"/>
    <property type="chains" value="C/G=2-130"/>
</dbReference>
<dbReference type="PDB" id="7D20">
    <property type="method" value="EM"/>
    <property type="resolution" value="3.00 A"/>
    <property type="chains" value="C/G=2-130"/>
</dbReference>
<dbReference type="PDB" id="7DBP">
    <property type="method" value="EM"/>
    <property type="resolution" value="4.50 A"/>
    <property type="chains" value="C/G=1-130"/>
</dbReference>
<dbReference type="PDB" id="7K5X">
    <property type="method" value="EM"/>
    <property type="resolution" value="2.93 A"/>
    <property type="chains" value="C/G=1-130"/>
</dbReference>
<dbReference type="PDB" id="7K5Y">
    <property type="method" value="EM"/>
    <property type="resolution" value="2.76 A"/>
    <property type="chains" value="C/G=1-130"/>
</dbReference>
<dbReference type="PDB" id="7K60">
    <property type="method" value="EM"/>
    <property type="resolution" value="3.12 A"/>
    <property type="chains" value="C/G=1-130"/>
</dbReference>
<dbReference type="PDB" id="7K61">
    <property type="method" value="EM"/>
    <property type="resolution" value="2.85 A"/>
    <property type="chains" value="C/G=1-130"/>
</dbReference>
<dbReference type="PDB" id="7K63">
    <property type="method" value="EM"/>
    <property type="resolution" value="3.03 A"/>
    <property type="chains" value="C/G=1-130"/>
</dbReference>
<dbReference type="PDB" id="7LYA">
    <property type="method" value="EM"/>
    <property type="resolution" value="2.91 A"/>
    <property type="chains" value="C/G=13-130"/>
</dbReference>
<dbReference type="PDB" id="7LYB">
    <property type="method" value="EM"/>
    <property type="resolution" value="3.28 A"/>
    <property type="chains" value="C/G=13-130"/>
</dbReference>
<dbReference type="PDB" id="7LYC">
    <property type="method" value="EM"/>
    <property type="resolution" value="2.94 A"/>
    <property type="chains" value="C/G=13-130"/>
</dbReference>
<dbReference type="PDB" id="7NL0">
    <property type="method" value="EM"/>
    <property type="resolution" value="3.50 A"/>
    <property type="chains" value="C/G=1-130"/>
</dbReference>
<dbReference type="PDB" id="7PET">
    <property type="method" value="EM"/>
    <property type="resolution" value="9.50 A"/>
    <property type="chains" value="C/G/M/Q/c/g/m/q=1-130"/>
</dbReference>
<dbReference type="PDB" id="7PEU">
    <property type="method" value="EM"/>
    <property type="resolution" value="7.20 A"/>
    <property type="chains" value="C/G/M/Q/c/g=1-130"/>
</dbReference>
<dbReference type="PDB" id="7PEV">
    <property type="method" value="EM"/>
    <property type="resolution" value="6.00 A"/>
    <property type="chains" value="C/G/M/Q=1-130"/>
</dbReference>
<dbReference type="PDB" id="7PEW">
    <property type="method" value="EM"/>
    <property type="resolution" value="4.60 A"/>
    <property type="chains" value="C/G=1-130"/>
</dbReference>
<dbReference type="PDB" id="7PEX">
    <property type="method" value="EM"/>
    <property type="resolution" value="5.10 A"/>
    <property type="chains" value="c/g=1-130"/>
</dbReference>
<dbReference type="PDB" id="7PEY">
    <property type="method" value="EM"/>
    <property type="resolution" value="4.50 A"/>
    <property type="chains" value="M/Q=1-130"/>
</dbReference>
<dbReference type="PDB" id="7PEZ">
    <property type="method" value="EM"/>
    <property type="resolution" value="7.90 A"/>
    <property type="chains" value="m/q=1-130"/>
</dbReference>
<dbReference type="PDB" id="7PF0">
    <property type="method" value="EM"/>
    <property type="resolution" value="11.00 A"/>
    <property type="chains" value="C/G/M/Q/c/g=1-130"/>
</dbReference>
<dbReference type="PDB" id="7PF2">
    <property type="method" value="EM"/>
    <property type="resolution" value="5.10 A"/>
    <property type="chains" value="C/G/M/Q=1-130"/>
</dbReference>
<dbReference type="PDB" id="7PF3">
    <property type="method" value="EM"/>
    <property type="resolution" value="4.00 A"/>
    <property type="chains" value="m/q=1-130"/>
</dbReference>
<dbReference type="PDB" id="7PF4">
    <property type="method" value="EM"/>
    <property type="resolution" value="4.00 A"/>
    <property type="chains" value="M/Q=1-130"/>
</dbReference>
<dbReference type="PDB" id="7PF5">
    <property type="method" value="EM"/>
    <property type="resolution" value="3.80 A"/>
    <property type="chains" value="c/g=1-130"/>
</dbReference>
<dbReference type="PDB" id="7PF6">
    <property type="method" value="EM"/>
    <property type="resolution" value="4.00 A"/>
    <property type="chains" value="C/G=1-130"/>
</dbReference>
<dbReference type="PDB" id="7PFA">
    <property type="method" value="EM"/>
    <property type="resolution" value="9.70 A"/>
    <property type="chains" value="C/G/M/Q/c/g=1-130"/>
</dbReference>
<dbReference type="PDB" id="7PFC">
    <property type="method" value="EM"/>
    <property type="resolution" value="6.40 A"/>
    <property type="chains" value="C/G/M/Q=1-130"/>
</dbReference>
<dbReference type="PDB" id="7PFD">
    <property type="method" value="EM"/>
    <property type="resolution" value="4.40 A"/>
    <property type="chains" value="C/G=1-130"/>
</dbReference>
<dbReference type="PDB" id="7PFE">
    <property type="method" value="EM"/>
    <property type="resolution" value="4.40 A"/>
    <property type="chains" value="c/g=1-130"/>
</dbReference>
<dbReference type="PDB" id="7PFF">
    <property type="method" value="EM"/>
    <property type="resolution" value="4.30 A"/>
    <property type="chains" value="M/Q=1-130"/>
</dbReference>
<dbReference type="PDB" id="7PFT">
    <property type="method" value="EM"/>
    <property type="resolution" value="9.80 A"/>
    <property type="chains" value="C/G/M/Q/c/g=1-130"/>
</dbReference>
<dbReference type="PDB" id="7PFU">
    <property type="method" value="EM"/>
    <property type="resolution" value="5.00 A"/>
    <property type="chains" value="C/G/M/Q=1-130"/>
</dbReference>
<dbReference type="PDB" id="7PFV">
    <property type="method" value="EM"/>
    <property type="resolution" value="4.40 A"/>
    <property type="chains" value="C/G=1-130"/>
</dbReference>
<dbReference type="PDB" id="7PFW">
    <property type="method" value="EM"/>
    <property type="resolution" value="5.20 A"/>
    <property type="chains" value="c/g=1-130"/>
</dbReference>
<dbReference type="PDB" id="7PFX">
    <property type="method" value="EM"/>
    <property type="resolution" value="4.30 A"/>
    <property type="chains" value="M/Q=1-130"/>
</dbReference>
<dbReference type="PDB" id="7SCY">
    <property type="method" value="EM"/>
    <property type="resolution" value="4.10 A"/>
    <property type="chains" value="C/G=1-130"/>
</dbReference>
<dbReference type="PDB" id="7SCZ">
    <property type="method" value="EM"/>
    <property type="resolution" value="3.50 A"/>
    <property type="chains" value="C/G=1-130"/>
</dbReference>
<dbReference type="PDB" id="7V90">
    <property type="method" value="EM"/>
    <property type="resolution" value="3.50 A"/>
    <property type="chains" value="C/G=1-130"/>
</dbReference>
<dbReference type="PDB" id="7V96">
    <property type="method" value="EM"/>
    <property type="resolution" value="3.92 A"/>
    <property type="chains" value="C/G/M/Q=1-130"/>
</dbReference>
<dbReference type="PDB" id="7V99">
    <property type="method" value="EM"/>
    <property type="resolution" value="3.54 A"/>
    <property type="chains" value="K=2-130"/>
</dbReference>
<dbReference type="PDB" id="7V9C">
    <property type="method" value="EM"/>
    <property type="resolution" value="4.50 A"/>
    <property type="chains" value="C/G/M/Q=1-130"/>
</dbReference>
<dbReference type="PDB" id="7V9J">
    <property type="method" value="EM"/>
    <property type="resolution" value="8.00 A"/>
    <property type="chains" value="C/G/M/Q/U/Y=1-130"/>
</dbReference>
<dbReference type="PDB" id="7V9K">
    <property type="method" value="EM"/>
    <property type="resolution" value="8.10 A"/>
    <property type="chains" value="C/G/M/Q/U/Y/c/g=1-130"/>
</dbReference>
<dbReference type="PDB" id="7V9S">
    <property type="method" value="EM"/>
    <property type="resolution" value="11.00 A"/>
    <property type="chains" value="C/G/M/Q/U/Y=1-130"/>
</dbReference>
<dbReference type="PDB" id="7VA4">
    <property type="method" value="EM"/>
    <property type="resolution" value="14.00 A"/>
    <property type="chains" value="C/G/M/Q/U/Y/c/g=1-130"/>
</dbReference>
<dbReference type="PDB" id="7VCL">
    <property type="method" value="X-ray"/>
    <property type="resolution" value="3.20 A"/>
    <property type="chains" value="A=14-113"/>
</dbReference>
<dbReference type="PDB" id="7VZ4">
    <property type="method" value="EM"/>
    <property type="resolution" value="1.89 A"/>
    <property type="chains" value="C/G=2-130"/>
</dbReference>
<dbReference type="PDB" id="7W9V">
    <property type="method" value="EM"/>
    <property type="resolution" value="3.95 A"/>
    <property type="chains" value="C/G=1-130"/>
</dbReference>
<dbReference type="PDB" id="7WBV">
    <property type="method" value="EM"/>
    <property type="resolution" value="4.10 A"/>
    <property type="chains" value="c/g=2-130"/>
</dbReference>
<dbReference type="PDB" id="7WBW">
    <property type="method" value="EM"/>
    <property type="resolution" value="7.10 A"/>
    <property type="chains" value="c/g=2-130"/>
</dbReference>
<dbReference type="PDB" id="7WBX">
    <property type="method" value="EM"/>
    <property type="resolution" value="4.00 A"/>
    <property type="chains" value="c/g=2-130"/>
</dbReference>
<dbReference type="PDB" id="7XCR">
    <property type="method" value="EM"/>
    <property type="resolution" value="2.57 A"/>
    <property type="chains" value="C/G=12-119"/>
</dbReference>
<dbReference type="PDB" id="7XCT">
    <property type="method" value="EM"/>
    <property type="resolution" value="2.72 A"/>
    <property type="chains" value="C/G=12-119"/>
</dbReference>
<dbReference type="PDB" id="7XD0">
    <property type="method" value="EM"/>
    <property type="resolution" value="3.48 A"/>
    <property type="chains" value="C/G=12-119"/>
</dbReference>
<dbReference type="PDB" id="7XD1">
    <property type="method" value="EM"/>
    <property type="resolution" value="3.20 A"/>
    <property type="chains" value="C/G=11-119"/>
</dbReference>
<dbReference type="PDB" id="7XSE">
    <property type="method" value="EM"/>
    <property type="resolution" value="3.60 A"/>
    <property type="chains" value="c/g=1-130"/>
</dbReference>
<dbReference type="PDB" id="7XSX">
    <property type="method" value="EM"/>
    <property type="resolution" value="3.80 A"/>
    <property type="chains" value="c/g=1-130"/>
</dbReference>
<dbReference type="PDB" id="7XSZ">
    <property type="method" value="EM"/>
    <property type="resolution" value="3.40 A"/>
    <property type="chains" value="c/g=1-130"/>
</dbReference>
<dbReference type="PDB" id="7XT7">
    <property type="method" value="EM"/>
    <property type="resolution" value="4.20 A"/>
    <property type="chains" value="c/g=1-130"/>
</dbReference>
<dbReference type="PDB" id="7XTD">
    <property type="method" value="EM"/>
    <property type="resolution" value="3.90 A"/>
    <property type="chains" value="c/g=1-130"/>
</dbReference>
<dbReference type="PDB" id="7XTI">
    <property type="method" value="EM"/>
    <property type="resolution" value="3.90 A"/>
    <property type="chains" value="g=1-130"/>
</dbReference>
<dbReference type="PDB" id="7XVL">
    <property type="method" value="X-ray"/>
    <property type="resolution" value="3.51 A"/>
    <property type="chains" value="C/G/M/Q/W/a/g/k=1-130"/>
</dbReference>
<dbReference type="PDB" id="7XVM">
    <property type="method" value="X-ray"/>
    <property type="resolution" value="2.84 A"/>
    <property type="chains" value="C/G/M/Q=1-130"/>
</dbReference>
<dbReference type="PDB" id="7XX5">
    <property type="method" value="X-ray"/>
    <property type="resolution" value="3.19 A"/>
    <property type="chains" value="C/G/M/Q=1-130"/>
</dbReference>
<dbReference type="PDB" id="7XX6">
    <property type="method" value="X-ray"/>
    <property type="resolution" value="3.39 A"/>
    <property type="chains" value="C/G/M/Q/W/a/g/k=1-130"/>
</dbReference>
<dbReference type="PDB" id="7XZX">
    <property type="method" value="EM"/>
    <property type="resolution" value="4.53 A"/>
    <property type="chains" value="C/G=1-130"/>
</dbReference>
<dbReference type="PDB" id="7XZY">
    <property type="method" value="EM"/>
    <property type="resolution" value="3.97 A"/>
    <property type="chains" value="C/G=1-130"/>
</dbReference>
<dbReference type="PDB" id="7XZZ">
    <property type="method" value="EM"/>
    <property type="resolution" value="4.07 A"/>
    <property type="chains" value="C/G=1-130"/>
</dbReference>
<dbReference type="PDB" id="7Y00">
    <property type="method" value="EM"/>
    <property type="resolution" value="3.96 A"/>
    <property type="chains" value="C/G=1-130"/>
</dbReference>
<dbReference type="PDB" id="7Y7I">
    <property type="method" value="EM"/>
    <property type="resolution" value="3.42 A"/>
    <property type="chains" value="C/G=1-130"/>
</dbReference>
<dbReference type="PDB" id="7ZI4">
    <property type="method" value="EM"/>
    <property type="resolution" value="3.20 A"/>
    <property type="chains" value="K/O=1-130"/>
</dbReference>
<dbReference type="PDB" id="8G57">
    <property type="method" value="EM"/>
    <property type="resolution" value="3.07 A"/>
    <property type="chains" value="C/G=2-130"/>
</dbReference>
<dbReference type="PDB" id="8GRM">
    <property type="method" value="EM"/>
    <property type="resolution" value="3.05 A"/>
    <property type="chains" value="C/G=12-120"/>
</dbReference>
<dbReference type="PDB" id="8H0V">
    <property type="method" value="EM"/>
    <property type="resolution" value="3.80 A"/>
    <property type="chains" value="c/g=1-130"/>
</dbReference>
<dbReference type="PDB" id="8H0W">
    <property type="method" value="EM"/>
    <property type="resolution" value="4.60 A"/>
    <property type="chains" value="c/g=1-130"/>
</dbReference>
<dbReference type="PDB" id="8HAG">
    <property type="method" value="EM"/>
    <property type="resolution" value="3.20 A"/>
    <property type="chains" value="C/G=2-130"/>
</dbReference>
<dbReference type="PDB" id="8HAH">
    <property type="method" value="EM"/>
    <property type="resolution" value="3.90 A"/>
    <property type="chains" value="C/G=2-130"/>
</dbReference>
<dbReference type="PDB" id="8HAI">
    <property type="method" value="EM"/>
    <property type="resolution" value="4.70 A"/>
    <property type="chains" value="C/G=2-130"/>
</dbReference>
<dbReference type="PDB" id="8HAJ">
    <property type="method" value="EM"/>
    <property type="resolution" value="4.80 A"/>
    <property type="chains" value="C/G=2-130"/>
</dbReference>
<dbReference type="PDB" id="8HAK">
    <property type="method" value="EM"/>
    <property type="resolution" value="4.50 A"/>
    <property type="chains" value="C/G=2-130"/>
</dbReference>
<dbReference type="PDB" id="8HAL">
    <property type="method" value="EM"/>
    <property type="resolution" value="4.40 A"/>
    <property type="chains" value="C/G=2-130"/>
</dbReference>
<dbReference type="PDB" id="8HAM">
    <property type="method" value="EM"/>
    <property type="resolution" value="4.50 A"/>
    <property type="chains" value="C/G=2-130"/>
</dbReference>
<dbReference type="PDB" id="8HAN">
    <property type="method" value="EM"/>
    <property type="resolution" value="4.20 A"/>
    <property type="chains" value="C/G=2-130"/>
</dbReference>
<dbReference type="PDB" id="8HE5">
    <property type="method" value="EM"/>
    <property type="resolution" value="6.95 A"/>
    <property type="chains" value="c/g=1-130"/>
</dbReference>
<dbReference type="PDB" id="8HQY">
    <property type="method" value="EM"/>
    <property type="resolution" value="3.05 A"/>
    <property type="chains" value="C/G=14-119"/>
</dbReference>
<dbReference type="PDB" id="8HR1">
    <property type="method" value="EM"/>
    <property type="resolution" value="3.02 A"/>
    <property type="chains" value="C/G=14-119"/>
</dbReference>
<dbReference type="PDB" id="8I17">
    <property type="method" value="X-ray"/>
    <property type="resolution" value="1.98 A"/>
    <property type="chains" value="A/D/G=14-113"/>
</dbReference>
<dbReference type="PDB" id="8IEG">
    <property type="method" value="EM"/>
    <property type="resolution" value="3.44 A"/>
    <property type="chains" value="C/G=11-119"/>
</dbReference>
<dbReference type="PDB" id="8IEJ">
    <property type="method" value="EM"/>
    <property type="resolution" value="3.12 A"/>
    <property type="chains" value="C/G=11-119"/>
</dbReference>
<dbReference type="PDB" id="8IHL">
    <property type="method" value="EM"/>
    <property type="resolution" value="7.64 A"/>
    <property type="chains" value="C/G/O/S=1-130"/>
</dbReference>
<dbReference type="PDB" id="8JBX">
    <property type="method" value="EM"/>
    <property type="resolution" value="3.35 A"/>
    <property type="chains" value="C/G=2-130"/>
</dbReference>
<dbReference type="PDB" id="8JCC">
    <property type="method" value="EM"/>
    <property type="resolution" value="3.42 A"/>
    <property type="chains" value="C/G=2-130"/>
</dbReference>
<dbReference type="PDB" id="8JCD">
    <property type="method" value="EM"/>
    <property type="resolution" value="3.14 A"/>
    <property type="chains" value="C/G=2-130"/>
</dbReference>
<dbReference type="PDB" id="8JH2">
    <property type="method" value="EM"/>
    <property type="resolution" value="5.70 A"/>
    <property type="chains" value="c/g=1-130"/>
</dbReference>
<dbReference type="PDB" id="8JH3">
    <property type="method" value="EM"/>
    <property type="resolution" value="3.70 A"/>
    <property type="chains" value="c/g=1-130"/>
</dbReference>
<dbReference type="PDB" id="8JH4">
    <property type="method" value="EM"/>
    <property type="resolution" value="3.20 A"/>
    <property type="chains" value="c/g=1-130"/>
</dbReference>
<dbReference type="PDB" id="8JHG">
    <property type="method" value="EM"/>
    <property type="resolution" value="3.58 A"/>
    <property type="chains" value="C/G=16-130"/>
</dbReference>
<dbReference type="PDB" id="8JL9">
    <property type="method" value="EM"/>
    <property type="resolution" value="2.65 A"/>
    <property type="chains" value="C/G=1-130"/>
</dbReference>
<dbReference type="PDB" id="8JLA">
    <property type="method" value="EM"/>
    <property type="resolution" value="3.44 A"/>
    <property type="chains" value="C/G=11-130"/>
</dbReference>
<dbReference type="PDB" id="8JLB">
    <property type="method" value="EM"/>
    <property type="resolution" value="2.36 A"/>
    <property type="chains" value="C/G=1-130"/>
</dbReference>
<dbReference type="PDB" id="8JLD">
    <property type="method" value="EM"/>
    <property type="resolution" value="2.48 A"/>
    <property type="chains" value="C/G=1-130"/>
</dbReference>
<dbReference type="PDB" id="8JND">
    <property type="method" value="EM"/>
    <property type="resolution" value="3.66 A"/>
    <property type="chains" value="C/G=1-130"/>
</dbReference>
<dbReference type="PDB" id="8JNE">
    <property type="method" value="EM"/>
    <property type="resolution" value="4.68 A"/>
    <property type="chains" value="C/G=1-130"/>
</dbReference>
<dbReference type="PDB" id="8JNF">
    <property type="method" value="EM"/>
    <property type="resolution" value="6.91 A"/>
    <property type="chains" value="C/G=1-130"/>
</dbReference>
<dbReference type="PDB" id="8KB5">
    <property type="method" value="EM"/>
    <property type="resolution" value="2.26 A"/>
    <property type="chains" value="C/G=1-130"/>
</dbReference>
<dbReference type="PDB" id="8KCY">
    <property type="method" value="EM"/>
    <property type="resolution" value="2.80 A"/>
    <property type="chains" value="C/G=1-130"/>
</dbReference>
<dbReference type="PDB" id="8KD1">
    <property type="method" value="EM"/>
    <property type="resolution" value="3.20 A"/>
    <property type="chains" value="C/G=1-130"/>
</dbReference>
<dbReference type="PDB" id="8KE0">
    <property type="method" value="EM"/>
    <property type="resolution" value="4.00 A"/>
    <property type="chains" value="C/G=1-130"/>
</dbReference>
<dbReference type="PDB" id="8OSJ">
    <property type="method" value="EM"/>
    <property type="resolution" value="6.20 A"/>
    <property type="chains" value="C/G=1-130"/>
</dbReference>
<dbReference type="PDB" id="8OSK">
    <property type="method" value="EM"/>
    <property type="resolution" value="3.60 A"/>
    <property type="chains" value="C/G=1-130"/>
</dbReference>
<dbReference type="PDB" id="8OSL">
    <property type="method" value="EM"/>
    <property type="resolution" value="4.90 A"/>
    <property type="chains" value="C/G=1-130"/>
</dbReference>
<dbReference type="PDB" id="8OTS">
    <property type="method" value="EM"/>
    <property type="resolution" value="3.30 A"/>
    <property type="chains" value="C/G=1-130"/>
</dbReference>
<dbReference type="PDB" id="8OTT">
    <property type="method" value="EM"/>
    <property type="resolution" value="3.30 A"/>
    <property type="chains" value="C=9-117"/>
</dbReference>
<dbReference type="PDB" id="8Q36">
    <property type="method" value="X-ray"/>
    <property type="resolution" value="2.60 A"/>
    <property type="chains" value="CCC/GGG=14-120"/>
</dbReference>
<dbReference type="PDB" id="8Q3E">
    <property type="method" value="X-ray"/>
    <property type="resolution" value="2.17 A"/>
    <property type="chains" value="CCC/GGG=14-120"/>
</dbReference>
<dbReference type="PDB" id="8Q3M">
    <property type="method" value="X-ray"/>
    <property type="resolution" value="2.50 A"/>
    <property type="chains" value="CCC/GGG=14-120"/>
</dbReference>
<dbReference type="PDB" id="8Q3X">
    <property type="method" value="X-ray"/>
    <property type="resolution" value="2.30 A"/>
    <property type="chains" value="CCC/GGG=14-120"/>
</dbReference>
<dbReference type="PDB" id="8RGM">
    <property type="method" value="EM"/>
    <property type="resolution" value="4.00 A"/>
    <property type="chains" value="C/G=2-130"/>
</dbReference>
<dbReference type="PDB" id="8SMW">
    <property type="method" value="EM"/>
    <property type="resolution" value="3.30 A"/>
    <property type="chains" value="C/G=12-130"/>
</dbReference>
<dbReference type="PDB" id="8SMX">
    <property type="method" value="EM"/>
    <property type="resolution" value="3.20 A"/>
    <property type="chains" value="C/G=12-130"/>
</dbReference>
<dbReference type="PDB" id="8SMY">
    <property type="method" value="EM"/>
    <property type="resolution" value="3.20 A"/>
    <property type="chains" value="C/G=12-130"/>
</dbReference>
<dbReference type="PDB" id="8SMZ">
    <property type="method" value="EM"/>
    <property type="resolution" value="3.20 A"/>
    <property type="chains" value="C/G=12-130"/>
</dbReference>
<dbReference type="PDB" id="8SN0">
    <property type="method" value="EM"/>
    <property type="resolution" value="3.20 A"/>
    <property type="chains" value="C/G=12-130"/>
</dbReference>
<dbReference type="PDB" id="8SN1">
    <property type="method" value="EM"/>
    <property type="resolution" value="3.30 A"/>
    <property type="chains" value="C/G=12-130"/>
</dbReference>
<dbReference type="PDB" id="8SN2">
    <property type="method" value="EM"/>
    <property type="resolution" value="3.60 A"/>
    <property type="chains" value="C/G=12-130"/>
</dbReference>
<dbReference type="PDB" id="8SN3">
    <property type="method" value="EM"/>
    <property type="resolution" value="3.80 A"/>
    <property type="chains" value="C/G=12-130"/>
</dbReference>
<dbReference type="PDB" id="8SN4">
    <property type="method" value="EM"/>
    <property type="resolution" value="3.70 A"/>
    <property type="chains" value="C/G=12-130"/>
</dbReference>
<dbReference type="PDB" id="8SN5">
    <property type="method" value="EM"/>
    <property type="resolution" value="3.90 A"/>
    <property type="chains" value="C/G=12-130"/>
</dbReference>
<dbReference type="PDB" id="8SN6">
    <property type="method" value="EM"/>
    <property type="resolution" value="3.70 A"/>
    <property type="chains" value="C/G=12-130"/>
</dbReference>
<dbReference type="PDB" id="8SN7">
    <property type="method" value="EM"/>
    <property type="resolution" value="3.70 A"/>
    <property type="chains" value="C/G=12-130"/>
</dbReference>
<dbReference type="PDB" id="8SN8">
    <property type="method" value="EM"/>
    <property type="resolution" value="3.70 A"/>
    <property type="chains" value="C/G=12-130"/>
</dbReference>
<dbReference type="PDB" id="8SN9">
    <property type="method" value="EM"/>
    <property type="resolution" value="3.90 A"/>
    <property type="chains" value="C/G=12-130"/>
</dbReference>
<dbReference type="PDB" id="8SNA">
    <property type="method" value="EM"/>
    <property type="resolution" value="4.00 A"/>
    <property type="chains" value="C/G=12-130"/>
</dbReference>
<dbReference type="PDB" id="8TXV">
    <property type="method" value="EM"/>
    <property type="resolution" value="3.80 A"/>
    <property type="chains" value="C/G=12-130"/>
</dbReference>
<dbReference type="PDB" id="8TXW">
    <property type="method" value="EM"/>
    <property type="resolution" value="3.60 A"/>
    <property type="chains" value="C/G=12-130"/>
</dbReference>
<dbReference type="PDB" id="8TXX">
    <property type="method" value="EM"/>
    <property type="resolution" value="3.70 A"/>
    <property type="chains" value="C/G=12-130"/>
</dbReference>
<dbReference type="PDB" id="8U13">
    <property type="method" value="EM"/>
    <property type="resolution" value="3.80 A"/>
    <property type="chains" value="C/G=13-130"/>
</dbReference>
<dbReference type="PDB" id="8U14">
    <property type="method" value="EM"/>
    <property type="resolution" value="3.90 A"/>
    <property type="chains" value="C/G=13-130"/>
</dbReference>
<dbReference type="PDB" id="8UPF">
    <property type="method" value="EM"/>
    <property type="resolution" value="3.20 A"/>
    <property type="chains" value="C/G=13-130"/>
</dbReference>
<dbReference type="PDB" id="8UQ8">
    <property type="method" value="X-ray"/>
    <property type="resolution" value="2.34 A"/>
    <property type="chains" value="A/a=13-106"/>
</dbReference>
<dbReference type="PDB" id="8UQ9">
    <property type="method" value="X-ray"/>
    <property type="resolution" value="2.30 A"/>
    <property type="chains" value="A/a=13-106"/>
</dbReference>
<dbReference type="PDB" id="8UQA">
    <property type="method" value="X-ray"/>
    <property type="resolution" value="2.05 A"/>
    <property type="chains" value="K=13-106"/>
</dbReference>
<dbReference type="PDB" id="8UQB">
    <property type="method" value="X-ray"/>
    <property type="resolution" value="2.48 A"/>
    <property type="chains" value="A=13-106"/>
</dbReference>
<dbReference type="PDB" id="8UQC">
    <property type="method" value="X-ray"/>
    <property type="resolution" value="2.61 A"/>
    <property type="chains" value="A=13-106"/>
</dbReference>
<dbReference type="PDB" id="8UQD">
    <property type="method" value="X-ray"/>
    <property type="resolution" value="3.89 A"/>
    <property type="chains" value="B=13-106"/>
</dbReference>
<dbReference type="PDB" id="8UQE">
    <property type="method" value="X-ray"/>
    <property type="resolution" value="3.56 A"/>
    <property type="chains" value="B=13-106"/>
</dbReference>
<dbReference type="PDB" id="8VFX">
    <property type="method" value="EM"/>
    <property type="resolution" value="2.65 A"/>
    <property type="chains" value="C/G=1-130"/>
</dbReference>
<dbReference type="PDB" id="8VFY">
    <property type="method" value="EM"/>
    <property type="resolution" value="2.89 A"/>
    <property type="chains" value="C/G=1-130"/>
</dbReference>
<dbReference type="PDB" id="8VFZ">
    <property type="method" value="EM"/>
    <property type="resolution" value="4.10 A"/>
    <property type="chains" value="C/G=1-130"/>
</dbReference>
<dbReference type="PDB" id="8VG0">
    <property type="method" value="EM"/>
    <property type="resolution" value="3.07 A"/>
    <property type="chains" value="C/G=1-130"/>
</dbReference>
<dbReference type="PDB" id="8VG1">
    <property type="method" value="EM"/>
    <property type="resolution" value="2.48 A"/>
    <property type="chains" value="C/G=1-130"/>
</dbReference>
<dbReference type="PDB" id="8VG2">
    <property type="method" value="EM"/>
    <property type="resolution" value="3.04 A"/>
    <property type="chains" value="C/G=1-130"/>
</dbReference>
<dbReference type="PDB" id="8VLR">
    <property type="method" value="EM"/>
    <property type="resolution" value="2.60 A"/>
    <property type="chains" value="C/G=12-119"/>
</dbReference>
<dbReference type="PDB" id="8W9D">
    <property type="method" value="EM"/>
    <property type="resolution" value="3.90 A"/>
    <property type="chains" value="c/g=1-130"/>
</dbReference>
<dbReference type="PDB" id="8W9E">
    <property type="method" value="EM"/>
    <property type="resolution" value="3.60 A"/>
    <property type="chains" value="c/g=1-130"/>
</dbReference>
<dbReference type="PDB" id="8W9F">
    <property type="method" value="EM"/>
    <property type="resolution" value="4.40 A"/>
    <property type="chains" value="c/g=1-130"/>
</dbReference>
<dbReference type="PDB" id="8WG5">
    <property type="method" value="EM"/>
    <property type="resolution" value="3.05 A"/>
    <property type="chains" value="C/G=11-119"/>
</dbReference>
<dbReference type="PDB" id="8X7I">
    <property type="method" value="EM"/>
    <property type="resolution" value="3.27 A"/>
    <property type="chains" value="C=11-121, G=11-119"/>
</dbReference>
<dbReference type="PDB" id="8XBT">
    <property type="method" value="EM"/>
    <property type="resolution" value="4.12 A"/>
    <property type="chains" value="C/G=1-130"/>
</dbReference>
<dbReference type="PDB" id="8XBU">
    <property type="method" value="EM"/>
    <property type="resolution" value="4.24 A"/>
    <property type="chains" value="C/G=1-130"/>
</dbReference>
<dbReference type="PDB" id="8Y3C">
    <property type="method" value="EM"/>
    <property type="resolution" value="5.21 A"/>
    <property type="chains" value="C/G/M=1-130"/>
</dbReference>
<dbReference type="PDB" id="8Y3D">
    <property type="method" value="EM"/>
    <property type="resolution" value="5.10 A"/>
    <property type="chains" value="C/G/M=1-130"/>
</dbReference>
<dbReference type="PDB" id="8Y3E">
    <property type="method" value="EM"/>
    <property type="resolution" value="5.32 A"/>
    <property type="chains" value="C/G/M=1-130"/>
</dbReference>
<dbReference type="PDB" id="8Y3F">
    <property type="method" value="EM"/>
    <property type="resolution" value="4.54 A"/>
    <property type="chains" value="C/G/M=1-130"/>
</dbReference>
<dbReference type="PDB" id="8YBJ">
    <property type="method" value="EM"/>
    <property type="resolution" value="2.38 A"/>
    <property type="chains" value="C/G=1-130"/>
</dbReference>
<dbReference type="PDB" id="8YBK">
    <property type="method" value="EM"/>
    <property type="resolution" value="2.69 A"/>
    <property type="chains" value="C/G=1-130"/>
</dbReference>
<dbReference type="PDB" id="8YNY">
    <property type="method" value="EM"/>
    <property type="resolution" value="4.52 A"/>
    <property type="chains" value="C/G=1-130"/>
</dbReference>
<dbReference type="PDB" id="8YTI">
    <property type="method" value="X-ray"/>
    <property type="resolution" value="2.70 A"/>
    <property type="chains" value="C/G/M/Q=1-130"/>
</dbReference>
<dbReference type="PDB" id="8YV8">
    <property type="method" value="EM"/>
    <property type="resolution" value="3.00 A"/>
    <property type="chains" value="C/G=2-130"/>
</dbReference>
<dbReference type="PDB" id="9IPU">
    <property type="method" value="EM"/>
    <property type="resolution" value="4.30 A"/>
    <property type="chains" value="C/G=2-130"/>
</dbReference>
<dbReference type="PDB" id="9J0N">
    <property type="method" value="EM"/>
    <property type="resolution" value="3.40 A"/>
    <property type="chains" value="c/g=1-130"/>
</dbReference>
<dbReference type="PDB" id="9J0O">
    <property type="method" value="EM"/>
    <property type="resolution" value="3.30 A"/>
    <property type="chains" value="c/g=1-130"/>
</dbReference>
<dbReference type="PDB" id="9J0P">
    <property type="method" value="EM"/>
    <property type="resolution" value="3.30 A"/>
    <property type="chains" value="c/g=1-130"/>
</dbReference>
<dbReference type="PDB" id="9J8M">
    <property type="method" value="EM"/>
    <property type="resolution" value="3.82 A"/>
    <property type="chains" value="C/G=1-130"/>
</dbReference>
<dbReference type="PDB" id="9J8N">
    <property type="method" value="EM"/>
    <property type="resolution" value="7.14 A"/>
    <property type="chains" value="C/G/c/g=1-130"/>
</dbReference>
<dbReference type="PDB" id="9J8O">
    <property type="method" value="EM"/>
    <property type="resolution" value="4.05 A"/>
    <property type="chains" value="C/G/c/g=1-130"/>
</dbReference>
<dbReference type="PDBsum" id="2CV5"/>
<dbReference type="PDBsum" id="2RVQ"/>
<dbReference type="PDBsum" id="3A6N"/>
<dbReference type="PDBsum" id="3AFA"/>
<dbReference type="PDBsum" id="3AN2"/>
<dbReference type="PDBsum" id="3AV1"/>
<dbReference type="PDBsum" id="3AV2"/>
<dbReference type="PDBsum" id="3AYW"/>
<dbReference type="PDBsum" id="3AZE"/>
<dbReference type="PDBsum" id="3AZF"/>
<dbReference type="PDBsum" id="3AZG"/>
<dbReference type="PDBsum" id="3AZH"/>
<dbReference type="PDBsum" id="3AZI"/>
<dbReference type="PDBsum" id="3AZJ"/>
<dbReference type="PDBsum" id="3AZK"/>
<dbReference type="PDBsum" id="3AZL"/>
<dbReference type="PDBsum" id="3AZM"/>
<dbReference type="PDBsum" id="3AZN"/>
<dbReference type="PDBsum" id="3W96"/>
<dbReference type="PDBsum" id="3W97"/>
<dbReference type="PDBsum" id="3W98"/>
<dbReference type="PDBsum" id="3W99"/>
<dbReference type="PDBsum" id="3WKJ"/>
<dbReference type="PDBsum" id="3WTP"/>
<dbReference type="PDBsum" id="3X1S"/>
<dbReference type="PDBsum" id="3X1V"/>
<dbReference type="PDBsum" id="4YM5"/>
<dbReference type="PDBsum" id="4YM6"/>
<dbReference type="PDBsum" id="4Z5T"/>
<dbReference type="PDBsum" id="5AV5"/>
<dbReference type="PDBsum" id="5AV6"/>
<dbReference type="PDBsum" id="5AV8"/>
<dbReference type="PDBsum" id="5AV9"/>
<dbReference type="PDBsum" id="5AVB"/>
<dbReference type="PDBsum" id="5AVC"/>
<dbReference type="PDBsum" id="5AY8"/>
<dbReference type="PDBsum" id="5B0Y"/>
<dbReference type="PDBsum" id="5B0Z"/>
<dbReference type="PDBsum" id="5B24"/>
<dbReference type="PDBsum" id="5B2I"/>
<dbReference type="PDBsum" id="5B2J"/>
<dbReference type="PDBsum" id="5B31"/>
<dbReference type="PDBsum" id="5B32"/>
<dbReference type="PDBsum" id="5B40"/>
<dbReference type="PDBsum" id="5CPI"/>
<dbReference type="PDBsum" id="5CPJ"/>
<dbReference type="PDBsum" id="5CPK"/>
<dbReference type="PDBsum" id="5GSE"/>
<dbReference type="PDBsum" id="5GTC"/>
<dbReference type="PDBsum" id="5GXQ"/>
<dbReference type="PDBsum" id="5JRG"/>
<dbReference type="PDBsum" id="5X7X"/>
<dbReference type="PDBsum" id="5XF3"/>
<dbReference type="PDBsum" id="5XF4"/>
<dbReference type="PDBsum" id="5XF5"/>
<dbReference type="PDBsum" id="5Y0C"/>
<dbReference type="PDBsum" id="5Y0D"/>
<dbReference type="PDBsum" id="5Z23"/>
<dbReference type="PDBsum" id="5ZBX"/>
<dbReference type="PDBsum" id="6A5L"/>
<dbReference type="PDBsum" id="6A5O"/>
<dbReference type="PDBsum" id="6A5P"/>
<dbReference type="PDBsum" id="6A5R"/>
<dbReference type="PDBsum" id="6A5T"/>
<dbReference type="PDBsum" id="6A5U"/>
<dbReference type="PDBsum" id="6ACL"/>
<dbReference type="PDBsum" id="6AEE"/>
<dbReference type="PDBsum" id="6BUZ"/>
<dbReference type="PDBsum" id="6E0C"/>
<dbReference type="PDBsum" id="6E0P"/>
<dbReference type="PDBsum" id="6HKT"/>
<dbReference type="PDBsum" id="6HTS"/>
<dbReference type="PDBsum" id="6INQ"/>
<dbReference type="PDBsum" id="6IPU"/>
<dbReference type="PDBsum" id="6IQ4"/>
<dbReference type="PDBsum" id="6IR9"/>
<dbReference type="PDBsum" id="6J4W"/>
<dbReference type="PDBsum" id="6J4X"/>
<dbReference type="PDBsum" id="6J4Y"/>
<dbReference type="PDBsum" id="6J4Z"/>
<dbReference type="PDBsum" id="6J50"/>
<dbReference type="PDBsum" id="6J51"/>
<dbReference type="PDBsum" id="6JR0"/>
<dbReference type="PDBsum" id="6JR1"/>
<dbReference type="PDBsum" id="6JXD"/>
<dbReference type="PDBsum" id="6KE9"/>
<dbReference type="PDBsum" id="6KXV"/>
<dbReference type="PDBsum" id="6L49"/>
<dbReference type="PDBsum" id="6L4A"/>
<dbReference type="PDBsum" id="6L9H"/>
<dbReference type="PDBsum" id="6L9Z"/>
<dbReference type="PDBsum" id="6LA2"/>
<dbReference type="PDBsum" id="6LA8"/>
<dbReference type="PDBsum" id="6LA9"/>
<dbReference type="PDBsum" id="6LAB"/>
<dbReference type="PDBsum" id="6LE9"/>
<dbReference type="PDBsum" id="6LER"/>
<dbReference type="PDBsum" id="6M3V"/>
<dbReference type="PDBsum" id="6M44"/>
<dbReference type="PDBsum" id="6O1D"/>
<dbReference type="PDBsum" id="6R8Y"/>
<dbReference type="PDBsum" id="6R8Z"/>
<dbReference type="PDBsum" id="6R90"/>
<dbReference type="PDBsum" id="6R91"/>
<dbReference type="PDBsum" id="6R92"/>
<dbReference type="PDBsum" id="6R93"/>
<dbReference type="PDBsum" id="6R94"/>
<dbReference type="PDBsum" id="6T79"/>
<dbReference type="PDBsum" id="6T7A"/>
<dbReference type="PDBsum" id="6T7B"/>
<dbReference type="PDBsum" id="6T7C"/>
<dbReference type="PDBsum" id="6T7D"/>
<dbReference type="PDBsum" id="6T90"/>
<dbReference type="PDBsum" id="6T93"/>
<dbReference type="PDBsum" id="6USJ"/>
<dbReference type="PDBsum" id="6V2K"/>
<dbReference type="PDBsum" id="6V92"/>
<dbReference type="PDBsum" id="6YOV"/>
<dbReference type="PDBsum" id="7BWD"/>
<dbReference type="PDBsum" id="7BXT"/>
<dbReference type="PDBsum" id="7BY0"/>
<dbReference type="PDBsum" id="7C0M"/>
<dbReference type="PDBsum" id="7CCQ"/>
<dbReference type="PDBsum" id="7CCR"/>
<dbReference type="PDBsum" id="7COW"/>
<dbReference type="PDBsum" id="7D1Z"/>
<dbReference type="PDBsum" id="7D20"/>
<dbReference type="PDBsum" id="7DBP"/>
<dbReference type="PDBsum" id="7K5X"/>
<dbReference type="PDBsum" id="7K5Y"/>
<dbReference type="PDBsum" id="7K60"/>
<dbReference type="PDBsum" id="7K61"/>
<dbReference type="PDBsum" id="7K63"/>
<dbReference type="PDBsum" id="7LYA"/>
<dbReference type="PDBsum" id="7LYB"/>
<dbReference type="PDBsum" id="7LYC"/>
<dbReference type="PDBsum" id="7NL0"/>
<dbReference type="PDBsum" id="7PET"/>
<dbReference type="PDBsum" id="7PEU"/>
<dbReference type="PDBsum" id="7PEV"/>
<dbReference type="PDBsum" id="7PEW"/>
<dbReference type="PDBsum" id="7PEX"/>
<dbReference type="PDBsum" id="7PEY"/>
<dbReference type="PDBsum" id="7PEZ"/>
<dbReference type="PDBsum" id="7PF0"/>
<dbReference type="PDBsum" id="7PF2"/>
<dbReference type="PDBsum" id="7PF3"/>
<dbReference type="PDBsum" id="7PF4"/>
<dbReference type="PDBsum" id="7PF5"/>
<dbReference type="PDBsum" id="7PF6"/>
<dbReference type="PDBsum" id="7PFA"/>
<dbReference type="PDBsum" id="7PFC"/>
<dbReference type="PDBsum" id="7PFD"/>
<dbReference type="PDBsum" id="7PFE"/>
<dbReference type="PDBsum" id="7PFF"/>
<dbReference type="PDBsum" id="7PFT"/>
<dbReference type="PDBsum" id="7PFU"/>
<dbReference type="PDBsum" id="7PFV"/>
<dbReference type="PDBsum" id="7PFW"/>
<dbReference type="PDBsum" id="7PFX"/>
<dbReference type="PDBsum" id="7SCY"/>
<dbReference type="PDBsum" id="7SCZ"/>
<dbReference type="PDBsum" id="7V90"/>
<dbReference type="PDBsum" id="7V96"/>
<dbReference type="PDBsum" id="7V99"/>
<dbReference type="PDBsum" id="7V9C"/>
<dbReference type="PDBsum" id="7V9J"/>
<dbReference type="PDBsum" id="7V9K"/>
<dbReference type="PDBsum" id="7V9S"/>
<dbReference type="PDBsum" id="7VA4"/>
<dbReference type="PDBsum" id="7VCL"/>
<dbReference type="PDBsum" id="7VZ4"/>
<dbReference type="PDBsum" id="7W9V"/>
<dbReference type="PDBsum" id="7WBV"/>
<dbReference type="PDBsum" id="7WBW"/>
<dbReference type="PDBsum" id="7WBX"/>
<dbReference type="PDBsum" id="7XCR"/>
<dbReference type="PDBsum" id="7XCT"/>
<dbReference type="PDBsum" id="7XD0"/>
<dbReference type="PDBsum" id="7XD1"/>
<dbReference type="PDBsum" id="7XSE"/>
<dbReference type="PDBsum" id="7XSX"/>
<dbReference type="PDBsum" id="7XSZ"/>
<dbReference type="PDBsum" id="7XT7"/>
<dbReference type="PDBsum" id="7XTD"/>
<dbReference type="PDBsum" id="7XTI"/>
<dbReference type="PDBsum" id="7XVL"/>
<dbReference type="PDBsum" id="7XVM"/>
<dbReference type="PDBsum" id="7XX5"/>
<dbReference type="PDBsum" id="7XX6"/>
<dbReference type="PDBsum" id="7XZX"/>
<dbReference type="PDBsum" id="7XZY"/>
<dbReference type="PDBsum" id="7XZZ"/>
<dbReference type="PDBsum" id="7Y00"/>
<dbReference type="PDBsum" id="7Y7I"/>
<dbReference type="PDBsum" id="7ZI4"/>
<dbReference type="PDBsum" id="8G57"/>
<dbReference type="PDBsum" id="8GRM"/>
<dbReference type="PDBsum" id="8H0V"/>
<dbReference type="PDBsum" id="8H0W"/>
<dbReference type="PDBsum" id="8HAG"/>
<dbReference type="PDBsum" id="8HAH"/>
<dbReference type="PDBsum" id="8HAI"/>
<dbReference type="PDBsum" id="8HAJ"/>
<dbReference type="PDBsum" id="8HAK"/>
<dbReference type="PDBsum" id="8HAL"/>
<dbReference type="PDBsum" id="8HAM"/>
<dbReference type="PDBsum" id="8HAN"/>
<dbReference type="PDBsum" id="8HE5"/>
<dbReference type="PDBsum" id="8HQY"/>
<dbReference type="PDBsum" id="8HR1"/>
<dbReference type="PDBsum" id="8I17"/>
<dbReference type="PDBsum" id="8IEG"/>
<dbReference type="PDBsum" id="8IEJ"/>
<dbReference type="PDBsum" id="8IHL"/>
<dbReference type="PDBsum" id="8JBX"/>
<dbReference type="PDBsum" id="8JCC"/>
<dbReference type="PDBsum" id="8JCD"/>
<dbReference type="PDBsum" id="8JH2"/>
<dbReference type="PDBsum" id="8JH3"/>
<dbReference type="PDBsum" id="8JH4"/>
<dbReference type="PDBsum" id="8JHG"/>
<dbReference type="PDBsum" id="8JL9"/>
<dbReference type="PDBsum" id="8JLA"/>
<dbReference type="PDBsum" id="8JLB"/>
<dbReference type="PDBsum" id="8JLD"/>
<dbReference type="PDBsum" id="8JND"/>
<dbReference type="PDBsum" id="8JNE"/>
<dbReference type="PDBsum" id="8JNF"/>
<dbReference type="PDBsum" id="8KB5"/>
<dbReference type="PDBsum" id="8KCY"/>
<dbReference type="PDBsum" id="8KD1"/>
<dbReference type="PDBsum" id="8KE0"/>
<dbReference type="PDBsum" id="8OSJ"/>
<dbReference type="PDBsum" id="8OSK"/>
<dbReference type="PDBsum" id="8OSL"/>
<dbReference type="PDBsum" id="8OTS"/>
<dbReference type="PDBsum" id="8OTT"/>
<dbReference type="PDBsum" id="8Q36"/>
<dbReference type="PDBsum" id="8Q3E"/>
<dbReference type="PDBsum" id="8Q3M"/>
<dbReference type="PDBsum" id="8Q3X"/>
<dbReference type="PDBsum" id="8RGM"/>
<dbReference type="PDBsum" id="8SMW"/>
<dbReference type="PDBsum" id="8SMX"/>
<dbReference type="PDBsum" id="8SMY"/>
<dbReference type="PDBsum" id="8SMZ"/>
<dbReference type="PDBsum" id="8SN0"/>
<dbReference type="PDBsum" id="8SN1"/>
<dbReference type="PDBsum" id="8SN2"/>
<dbReference type="PDBsum" id="8SN3"/>
<dbReference type="PDBsum" id="8SN4"/>
<dbReference type="PDBsum" id="8SN5"/>
<dbReference type="PDBsum" id="8SN6"/>
<dbReference type="PDBsum" id="8SN7"/>
<dbReference type="PDBsum" id="8SN8"/>
<dbReference type="PDBsum" id="8SN9"/>
<dbReference type="PDBsum" id="8SNA"/>
<dbReference type="PDBsum" id="8TXV"/>
<dbReference type="PDBsum" id="8TXW"/>
<dbReference type="PDBsum" id="8TXX"/>
<dbReference type="PDBsum" id="8U13"/>
<dbReference type="PDBsum" id="8U14"/>
<dbReference type="PDBsum" id="8UPF"/>
<dbReference type="PDBsum" id="8UQ8"/>
<dbReference type="PDBsum" id="8UQ9"/>
<dbReference type="PDBsum" id="8UQA"/>
<dbReference type="PDBsum" id="8UQB"/>
<dbReference type="PDBsum" id="8UQC"/>
<dbReference type="PDBsum" id="8UQD"/>
<dbReference type="PDBsum" id="8UQE"/>
<dbReference type="PDBsum" id="8VFX"/>
<dbReference type="PDBsum" id="8VFY"/>
<dbReference type="PDBsum" id="8VFZ"/>
<dbReference type="PDBsum" id="8VG0"/>
<dbReference type="PDBsum" id="8VG1"/>
<dbReference type="PDBsum" id="8VG2"/>
<dbReference type="PDBsum" id="8VLR"/>
<dbReference type="PDBsum" id="8W9D"/>
<dbReference type="PDBsum" id="8W9E"/>
<dbReference type="PDBsum" id="8W9F"/>
<dbReference type="PDBsum" id="8WG5"/>
<dbReference type="PDBsum" id="8X7I"/>
<dbReference type="PDBsum" id="8XBT"/>
<dbReference type="PDBsum" id="8XBU"/>
<dbReference type="PDBsum" id="8Y3C"/>
<dbReference type="PDBsum" id="8Y3D"/>
<dbReference type="PDBsum" id="8Y3E"/>
<dbReference type="PDBsum" id="8Y3F"/>
<dbReference type="PDBsum" id="8YBJ"/>
<dbReference type="PDBsum" id="8YBK"/>
<dbReference type="PDBsum" id="8YNY"/>
<dbReference type="PDBsum" id="8YTI"/>
<dbReference type="PDBsum" id="8YV8"/>
<dbReference type="PDBsum" id="9IPU"/>
<dbReference type="PDBsum" id="9J0N"/>
<dbReference type="PDBsum" id="9J0O"/>
<dbReference type="PDBsum" id="9J0P"/>
<dbReference type="PDBsum" id="9J8M"/>
<dbReference type="PDBsum" id="9J8N"/>
<dbReference type="PDBsum" id="9J8O"/>
<dbReference type="EMDB" id="EMD-0586"/>
<dbReference type="EMDB" id="EMD-0671"/>
<dbReference type="EMDB" id="EMD-0672"/>
<dbReference type="EMDB" id="EMD-0673"/>
<dbReference type="EMDB" id="EMD-0674"/>
<dbReference type="EMDB" id="EMD-0675"/>
<dbReference type="EMDB" id="EMD-0676"/>
<dbReference type="EMDB" id="EMD-10390"/>
<dbReference type="EMDB" id="EMD-10391"/>
<dbReference type="EMDB" id="EMD-10392"/>
<dbReference type="EMDB" id="EMD-10393"/>
<dbReference type="EMDB" id="EMD-10394"/>
<dbReference type="EMDB" id="EMD-10406"/>
<dbReference type="EMDB" id="EMD-10408"/>
<dbReference type="EMDB" id="EMD-10864"/>
<dbReference type="EMDB" id="EMD-12453"/>
<dbReference type="EMDB" id="EMD-13356"/>
<dbReference type="EMDB" id="EMD-13357"/>
<dbReference type="EMDB" id="EMD-13358"/>
<dbReference type="EMDB" id="EMD-13359"/>
<dbReference type="EMDB" id="EMD-13360"/>
<dbReference type="EMDB" id="EMD-13361"/>
<dbReference type="EMDB" id="EMD-13362"/>
<dbReference type="EMDB" id="EMD-13363"/>
<dbReference type="EMDB" id="EMD-13365"/>
<dbReference type="EMDB" id="EMD-13366"/>
<dbReference type="EMDB" id="EMD-13367"/>
<dbReference type="EMDB" id="EMD-13368"/>
<dbReference type="EMDB" id="EMD-13369"/>
<dbReference type="EMDB" id="EMD-13370"/>
<dbReference type="EMDB" id="EMD-13371"/>
<dbReference type="EMDB" id="EMD-13372"/>
<dbReference type="EMDB" id="EMD-13373"/>
<dbReference type="EMDB" id="EMD-13374"/>
<dbReference type="EMDB" id="EMD-13379"/>
<dbReference type="EMDB" id="EMD-13380"/>
<dbReference type="EMDB" id="EMD-13381"/>
<dbReference type="EMDB" id="EMD-13382"/>
<dbReference type="EMDB" id="EMD-13383"/>
<dbReference type="EMDB" id="EMD-14737"/>
<dbReference type="EMDB" id="EMD-17155"/>
<dbReference type="EMDB" id="EMD-17157"/>
<dbReference type="EMDB" id="EMD-17160"/>
<dbReference type="EMDB" id="EMD-17183"/>
<dbReference type="EMDB" id="EMD-17184"/>
<dbReference type="EMDB" id="EMD-19134"/>
<dbReference type="EMDB" id="EMD-21114"/>
<dbReference type="EMDB" id="EMD-22683"/>
<dbReference type="EMDB" id="EMD-22684"/>
<dbReference type="EMDB" id="EMD-22685"/>
<dbReference type="EMDB" id="EMD-22686"/>
<dbReference type="EMDB" id="EMD-22687"/>
<dbReference type="EMDB" id="EMD-22688"/>
<dbReference type="EMDB" id="EMD-23590"/>
<dbReference type="EMDB" id="EMD-23591"/>
<dbReference type="EMDB" id="EMD-23592"/>
<dbReference type="EMDB" id="EMD-29735"/>
<dbReference type="EMDB" id="EMD-30232"/>
<dbReference type="EMDB" id="EMD-30237"/>
<dbReference type="EMDB" id="EMD-30239"/>
<dbReference type="EMDB" id="EMD-30267"/>
<dbReference type="EMDB" id="EMD-30339"/>
<dbReference type="EMDB" id="EMD-30340"/>
<dbReference type="EMDB" id="EMD-30551"/>
<dbReference type="EMDB" id="EMD-30552"/>
<dbReference type="EMDB" id="EMD-31806"/>
<dbReference type="EMDB" id="EMD-31810"/>
<dbReference type="EMDB" id="EMD-31811"/>
<dbReference type="EMDB" id="EMD-31812"/>
<dbReference type="EMDB" id="EMD-31815"/>
<dbReference type="EMDB" id="EMD-31816"/>
<dbReference type="EMDB" id="EMD-31823"/>
<dbReference type="EMDB" id="EMD-31826"/>
<dbReference type="EMDB" id="EMD-31832"/>
<dbReference type="EMDB" id="EMD-32220"/>
<dbReference type="EMDB" id="EMD-32373"/>
<dbReference type="EMDB" id="EMD-32407"/>
<dbReference type="EMDB" id="EMD-32408"/>
<dbReference type="EMDB" id="EMD-32409"/>
<dbReference type="EMDB" id="EMD-33132"/>
<dbReference type="EMDB" id="EMD-33424"/>
<dbReference type="EMDB" id="EMD-33436"/>
<dbReference type="EMDB" id="EMD-33437"/>
<dbReference type="EMDB" id="EMD-33441"/>
<dbReference type="EMDB" id="EMD-33447"/>
<dbReference type="EMDB" id="EMD-33450"/>
<dbReference type="EMDB" id="EMD-33533"/>
<dbReference type="EMDB" id="EMD-33534"/>
<dbReference type="EMDB" id="EMD-33535"/>
<dbReference type="EMDB" id="EMD-33536"/>
<dbReference type="EMDB" id="EMD-33666"/>
<dbReference type="EMDB" id="EMD-34207"/>
<dbReference type="EMDB" id="EMD-34415"/>
<dbReference type="EMDB" id="EMD-34416"/>
<dbReference type="EMDB" id="EMD-34588"/>
<dbReference type="EMDB" id="EMD-34589"/>
<dbReference type="EMDB" id="EMD-34591"/>
<dbReference type="EMDB" id="EMD-34592"/>
<dbReference type="EMDB" id="EMD-34594"/>
<dbReference type="EMDB" id="EMD-34595"/>
<dbReference type="EMDB" id="EMD-34596"/>
<dbReference type="EMDB" id="EMD-34597"/>
<dbReference type="EMDB" id="EMD-34685"/>
<dbReference type="EMDB" id="EMD-34954"/>
<dbReference type="EMDB" id="EMD-34956"/>
<dbReference type="EMDB" id="EMD-35381"/>
<dbReference type="EMDB" id="EMD-35383"/>
<dbReference type="EMDB" id="EMD-35448"/>
<dbReference type="EMDB" id="EMD-36148"/>
<dbReference type="EMDB" id="EMD-36157"/>
<dbReference type="EMDB" id="EMD-36158"/>
<dbReference type="EMDB" id="EMD-36251"/>
<dbReference type="EMDB" id="EMD-36252"/>
<dbReference type="EMDB" id="EMD-36253"/>
<dbReference type="EMDB" id="EMD-36265"/>
<dbReference type="EMDB" id="EMD-36389"/>
<dbReference type="EMDB" id="EMD-36390"/>
<dbReference type="EMDB" id="EMD-36391"/>
<dbReference type="EMDB" id="EMD-36393"/>
<dbReference type="EMDB" id="EMD-36442"/>
<dbReference type="EMDB" id="EMD-36443"/>
<dbReference type="EMDB" id="EMD-36444"/>
<dbReference type="EMDB" id="EMD-37070"/>
<dbReference type="EMDB" id="EMD-37115"/>
<dbReference type="EMDB" id="EMD-37121"/>
<dbReference type="EMDB" id="EMD-37149"/>
<dbReference type="EMDB" id="EMD-37365"/>
<dbReference type="EMDB" id="EMD-37366"/>
<dbReference type="EMDB" id="EMD-37367"/>
<dbReference type="EMDB" id="EMD-37503"/>
<dbReference type="EMDB" id="EMD-38099"/>
<dbReference type="EMDB" id="EMD-38100"/>
<dbReference type="EMDB" id="EMD-38101"/>
<dbReference type="EMDB" id="EMD-38228"/>
<dbReference type="EMDB" id="EMD-38229"/>
<dbReference type="EMDB" id="EMD-38877"/>
<dbReference type="EMDB" id="EMD-38878"/>
<dbReference type="EMDB" id="EMD-38879"/>
<dbReference type="EMDB" id="EMD-38880"/>
<dbReference type="EMDB" id="EMD-39119"/>
<dbReference type="EMDB" id="EMD-39120"/>
<dbReference type="EMDB" id="EMD-39431"/>
<dbReference type="EMDB" id="EMD-3954"/>
<dbReference type="EMDB" id="EMD-39594"/>
<dbReference type="EMDB" id="EMD-40604"/>
<dbReference type="EMDB" id="EMD-40605"/>
<dbReference type="EMDB" id="EMD-40606"/>
<dbReference type="EMDB" id="EMD-40607"/>
<dbReference type="EMDB" id="EMD-40608"/>
<dbReference type="EMDB" id="EMD-40609"/>
<dbReference type="EMDB" id="EMD-40610"/>
<dbReference type="EMDB" id="EMD-40611"/>
<dbReference type="EMDB" id="EMD-40612"/>
<dbReference type="EMDB" id="EMD-40613"/>
<dbReference type="EMDB" id="EMD-40614"/>
<dbReference type="EMDB" id="EMD-40615"/>
<dbReference type="EMDB" id="EMD-40616"/>
<dbReference type="EMDB" id="EMD-40617"/>
<dbReference type="EMDB" id="EMD-40618"/>
<dbReference type="EMDB" id="EMD-41706"/>
<dbReference type="EMDB" id="EMD-41707"/>
<dbReference type="EMDB" id="EMD-41708"/>
<dbReference type="EMDB" id="EMD-41800"/>
<dbReference type="EMDB" id="EMD-41801"/>
<dbReference type="EMDB" id="EMD-42446"/>
<dbReference type="EMDB" id="EMD-43193"/>
<dbReference type="EMDB" id="EMD-43194"/>
<dbReference type="EMDB" id="EMD-43195"/>
<dbReference type="EMDB" id="EMD-43196"/>
<dbReference type="EMDB" id="EMD-43197"/>
<dbReference type="EMDB" id="EMD-43198"/>
<dbReference type="EMDB" id="EMD-43342"/>
<dbReference type="EMDB" id="EMD-4762"/>
<dbReference type="EMDB" id="EMD-4763"/>
<dbReference type="EMDB" id="EMD-4764"/>
<dbReference type="EMDB" id="EMD-4765"/>
<dbReference type="EMDB" id="EMD-4766"/>
<dbReference type="EMDB" id="EMD-4767"/>
<dbReference type="EMDB" id="EMD-4768"/>
<dbReference type="EMDB" id="EMD-60781"/>
<dbReference type="EMDB" id="EMD-61058"/>
<dbReference type="EMDB" id="EMD-61059"/>
<dbReference type="EMDB" id="EMD-61060"/>
<dbReference type="EMDB" id="EMD-61231"/>
<dbReference type="EMDB" id="EMD-61232"/>
<dbReference type="EMDB" id="EMD-61233"/>
<dbReference type="EMDB" id="EMD-6980"/>
<dbReference type="EMDB" id="EMD-6981"/>
<dbReference type="EMDB" id="EMD-6982"/>
<dbReference type="EMDB" id="EMD-6983"/>
<dbReference type="EMDB" id="EMD-6984"/>
<dbReference type="EMDB" id="EMD-6985"/>
<dbReference type="EMDB" id="EMD-6986"/>
<dbReference type="EMDB" id="EMD-7293"/>
<dbReference type="EMDB" id="EMD-7318"/>
<dbReference type="EMDB" id="EMD-8945"/>
<dbReference type="EMDB" id="EMD-8949"/>
<dbReference type="EMDB" id="EMD-9713"/>
<dbReference type="SASBDB" id="P04908"/>
<dbReference type="SMR" id="P04908"/>
<dbReference type="BioGRID" id="109266">
    <property type="interactions" value="187"/>
</dbReference>
<dbReference type="BioGRID" id="113931">
    <property type="interactions" value="572"/>
</dbReference>
<dbReference type="ComplexPortal" id="CPX-2556">
    <property type="entry name" value="Nucleosome, variant H3.1-H2A.2-H2B.1"/>
</dbReference>
<dbReference type="ComplexPortal" id="CPX-2558">
    <property type="entry name" value="Nucleosome complex, H2BC12 variant"/>
</dbReference>
<dbReference type="ComplexPortal" id="CPX-2564">
    <property type="entry name" value="Nucleosome, variant H3.1t-H2A.2-H2B.1"/>
</dbReference>
<dbReference type="ComplexPortal" id="CPX-5647">
    <property type="entry name" value="CENP-A nucleosome complex"/>
</dbReference>
<dbReference type="ComplexPortal" id="CPX-5668">
    <property type="entry name" value="Nucleosome, variant H3.2-H2A.2-H2B.1"/>
</dbReference>
<dbReference type="DIP" id="DIP-44197N"/>
<dbReference type="FunCoup" id="P04908">
    <property type="interactions" value="1246"/>
</dbReference>
<dbReference type="IntAct" id="P04908">
    <property type="interactions" value="230"/>
</dbReference>
<dbReference type="MINT" id="P04908"/>
<dbReference type="STRING" id="9606.ENSP00000303373"/>
<dbReference type="GlyCosmos" id="P04908">
    <property type="glycosylation" value="1 site, 1 glycan"/>
</dbReference>
<dbReference type="GlyGen" id="P04908">
    <property type="glycosylation" value="3 sites, 1 N-linked glycan (1 site), 1 O-linked glycan (2 sites)"/>
</dbReference>
<dbReference type="iPTMnet" id="P04908"/>
<dbReference type="PhosphoSitePlus" id="P04908"/>
<dbReference type="SwissPalm" id="P04908"/>
<dbReference type="BioMuta" id="HIST1H2AE"/>
<dbReference type="DMDM" id="124028530"/>
<dbReference type="jPOST" id="P04908"/>
<dbReference type="MassIVE" id="P04908"/>
<dbReference type="PaxDb" id="9606-ENSP00000303373"/>
<dbReference type="PeptideAtlas" id="P04908"/>
<dbReference type="PRIDE" id="P04908"/>
<dbReference type="Pumba" id="P04908"/>
<dbReference type="TopDownProteomics" id="P04908"/>
<dbReference type="ABCD" id="P04908">
    <property type="antibodies" value="1 sequenced antibody"/>
</dbReference>
<dbReference type="Antibodypedia" id="72464">
    <property type="antibodies" value="208 antibodies from 18 providers"/>
</dbReference>
<dbReference type="Antibodypedia" id="72637">
    <property type="antibodies" value="65 antibodies from 7 providers"/>
</dbReference>
<dbReference type="DNASU" id="3012"/>
<dbReference type="Ensembl" id="ENST00000303910.5">
    <property type="protein sequence ID" value="ENSP00000303373.2"/>
    <property type="gene ID" value="ENSG00000277075.4"/>
</dbReference>
<dbReference type="Ensembl" id="ENST00000615868.2">
    <property type="protein sequence ID" value="ENSP00000483842.2"/>
    <property type="gene ID" value="ENSG00000278463.2"/>
</dbReference>
<dbReference type="Ensembl" id="ENST00000850583.1">
    <property type="protein sequence ID" value="ENSP00000520870.1"/>
    <property type="gene ID" value="ENSG00000277075.4"/>
</dbReference>
<dbReference type="GeneID" id="3012"/>
<dbReference type="GeneID" id="8335"/>
<dbReference type="KEGG" id="hsa:3012"/>
<dbReference type="KEGG" id="hsa:8335"/>
<dbReference type="MANE-Select" id="ENST00000303910.5">
    <property type="protein sequence ID" value="ENSP00000303373.2"/>
    <property type="RefSeq nucleotide sequence ID" value="NM_021052.4"/>
    <property type="RefSeq protein sequence ID" value="NP_066390.1"/>
</dbReference>
<dbReference type="MANE-Select" id="ENST00000615868.2">
    <property type="protein sequence ID" value="ENSP00000483842.2"/>
    <property type="RefSeq nucleotide sequence ID" value="NM_003513.3"/>
    <property type="RefSeq protein sequence ID" value="NP_003504.2"/>
</dbReference>
<dbReference type="AGR" id="HGNC:4724"/>
<dbReference type="AGR" id="HGNC:4734"/>
<dbReference type="CTD" id="3012"/>
<dbReference type="CTD" id="8335"/>
<dbReference type="DisGeNET" id="3012"/>
<dbReference type="DisGeNET" id="8335"/>
<dbReference type="GeneCards" id="H2AC4"/>
<dbReference type="GeneCards" id="H2AC8"/>
<dbReference type="HGNC" id="HGNC:4734">
    <property type="gene designation" value="H2AC4"/>
</dbReference>
<dbReference type="HGNC" id="HGNC:4724">
    <property type="gene designation" value="H2AC8"/>
</dbReference>
<dbReference type="HPA" id="ENSG00000277075">
    <property type="expression patterns" value="Tissue enhanced (breast)"/>
</dbReference>
<dbReference type="HPA" id="ENSG00000278463">
    <property type="expression patterns" value="Tissue enhanced (bone)"/>
</dbReference>
<dbReference type="MIM" id="602786">
    <property type="type" value="gene"/>
</dbReference>
<dbReference type="MIM" id="602795">
    <property type="type" value="gene"/>
</dbReference>
<dbReference type="neXtProt" id="NX_P04908"/>
<dbReference type="OpenTargets" id="ENSG00000277075"/>
<dbReference type="OpenTargets" id="ENSG00000278463"/>
<dbReference type="VEuPathDB" id="HostDB:ENSG00000277075"/>
<dbReference type="VEuPathDB" id="HostDB:ENSG00000278463"/>
<dbReference type="eggNOG" id="KOG1756">
    <property type="taxonomic scope" value="Eukaryota"/>
</dbReference>
<dbReference type="GeneTree" id="ENSGT00940000153092"/>
<dbReference type="HOGENOM" id="CLU_062828_3_1_1"/>
<dbReference type="InParanoid" id="P04908"/>
<dbReference type="OMA" id="LILECFW"/>
<dbReference type="OrthoDB" id="9829024at2759"/>
<dbReference type="PAN-GO" id="P04908">
    <property type="GO annotations" value="1 GO annotation based on evolutionary models"/>
</dbReference>
<dbReference type="PhylomeDB" id="P04908"/>
<dbReference type="TreeFam" id="TF300137"/>
<dbReference type="PathwayCommons" id="P04908"/>
<dbReference type="Reactome" id="R-HSA-110328">
    <property type="pathway name" value="Recognition and association of DNA glycosylase with site containing an affected pyrimidine"/>
</dbReference>
<dbReference type="Reactome" id="R-HSA-110329">
    <property type="pathway name" value="Cleavage of the damaged pyrimidine"/>
</dbReference>
<dbReference type="Reactome" id="R-HSA-110330">
    <property type="pathway name" value="Recognition and association of DNA glycosylase with site containing an affected purine"/>
</dbReference>
<dbReference type="Reactome" id="R-HSA-110331">
    <property type="pathway name" value="Cleavage of the damaged purine"/>
</dbReference>
<dbReference type="Reactome" id="R-HSA-1221632">
    <property type="pathway name" value="Meiotic synapsis"/>
</dbReference>
<dbReference type="Reactome" id="R-HSA-171306">
    <property type="pathway name" value="Packaging Of Telomere Ends"/>
</dbReference>
<dbReference type="Reactome" id="R-HSA-1912408">
    <property type="pathway name" value="Pre-NOTCH Transcription and Translation"/>
</dbReference>
<dbReference type="Reactome" id="R-HSA-201722">
    <property type="pathway name" value="Formation of the beta-catenin:TCF transactivating complex"/>
</dbReference>
<dbReference type="Reactome" id="R-HSA-212300">
    <property type="pathway name" value="PRC2 methylates histones and DNA"/>
</dbReference>
<dbReference type="Reactome" id="R-HSA-2299718">
    <property type="pathway name" value="Condensation of Prophase Chromosomes"/>
</dbReference>
<dbReference type="Reactome" id="R-HSA-2559580">
    <property type="pathway name" value="Oxidative Stress Induced Senescence"/>
</dbReference>
<dbReference type="Reactome" id="R-HSA-2559582">
    <property type="pathway name" value="Senescence-Associated Secretory Phenotype (SASP)"/>
</dbReference>
<dbReference type="Reactome" id="R-HSA-2559586">
    <property type="pathway name" value="DNA Damage/Telomere Stress Induced Senescence"/>
</dbReference>
<dbReference type="Reactome" id="R-HSA-3214815">
    <property type="pathway name" value="HDACs deacetylate histones"/>
</dbReference>
<dbReference type="Reactome" id="R-HSA-3214847">
    <property type="pathway name" value="HATs acetylate histones"/>
</dbReference>
<dbReference type="Reactome" id="R-HSA-3214858">
    <property type="pathway name" value="RMTs methylate histone arginines"/>
</dbReference>
<dbReference type="Reactome" id="R-HSA-427359">
    <property type="pathway name" value="SIRT1 negatively regulates rRNA expression"/>
</dbReference>
<dbReference type="Reactome" id="R-HSA-427389">
    <property type="pathway name" value="ERCC6 (CSB) and EHMT2 (G9a) positively regulate rRNA expression"/>
</dbReference>
<dbReference type="Reactome" id="R-HSA-427413">
    <property type="pathway name" value="NoRC negatively regulates rRNA expression"/>
</dbReference>
<dbReference type="Reactome" id="R-HSA-5250924">
    <property type="pathway name" value="B-WICH complex positively regulates rRNA expression"/>
</dbReference>
<dbReference type="Reactome" id="R-HSA-5334118">
    <property type="pathway name" value="DNA methylation"/>
</dbReference>
<dbReference type="Reactome" id="R-HSA-5578749">
    <property type="pathway name" value="Transcriptional regulation by small RNAs"/>
</dbReference>
<dbReference type="Reactome" id="R-HSA-5617472">
    <property type="pathway name" value="Activation of anterior HOX genes in hindbrain development during early embryogenesis"/>
</dbReference>
<dbReference type="Reactome" id="R-HSA-5625886">
    <property type="pathway name" value="Activated PKN1 stimulates transcription of AR (androgen receptor) regulated genes KLK2 and KLK3"/>
</dbReference>
<dbReference type="Reactome" id="R-HSA-5689603">
    <property type="pathway name" value="UCH proteinases"/>
</dbReference>
<dbReference type="Reactome" id="R-HSA-5689880">
    <property type="pathway name" value="Ub-specific processing proteases"/>
</dbReference>
<dbReference type="Reactome" id="R-HSA-5689901">
    <property type="pathway name" value="Metalloprotease DUBs"/>
</dbReference>
<dbReference type="Reactome" id="R-HSA-606279">
    <property type="pathway name" value="Deposition of new CENPA-containing nucleosomes at the centromere"/>
</dbReference>
<dbReference type="Reactome" id="R-HSA-68616">
    <property type="pathway name" value="Assembly of the ORC complex at the origin of replication"/>
</dbReference>
<dbReference type="Reactome" id="R-HSA-73728">
    <property type="pathway name" value="RNA Polymerase I Promoter Opening"/>
</dbReference>
<dbReference type="Reactome" id="R-HSA-73772">
    <property type="pathway name" value="RNA Polymerase I Promoter Escape"/>
</dbReference>
<dbReference type="Reactome" id="R-HSA-8936459">
    <property type="pathway name" value="RUNX1 regulates genes involved in megakaryocyte differentiation and platelet function"/>
</dbReference>
<dbReference type="Reactome" id="R-HSA-8939236">
    <property type="pathway name" value="RUNX1 regulates transcription of genes involved in differentiation of HSCs"/>
</dbReference>
<dbReference type="Reactome" id="R-HSA-9018519">
    <property type="pathway name" value="Estrogen-dependent gene expression"/>
</dbReference>
<dbReference type="Reactome" id="R-HSA-912446">
    <property type="pathway name" value="Meiotic recombination"/>
</dbReference>
<dbReference type="Reactome" id="R-HSA-9609690">
    <property type="pathway name" value="HCMV Early Events"/>
</dbReference>
<dbReference type="Reactome" id="R-HSA-9610379">
    <property type="pathway name" value="HCMV Late Events"/>
</dbReference>
<dbReference type="Reactome" id="R-HSA-9616222">
    <property type="pathway name" value="Transcriptional regulation of granulopoiesis"/>
</dbReference>
<dbReference type="Reactome" id="R-HSA-9670095">
    <property type="pathway name" value="Inhibition of DNA recombination at telomere"/>
</dbReference>
<dbReference type="Reactome" id="R-HSA-9710421">
    <property type="pathway name" value="Defective pyroptosis"/>
</dbReference>
<dbReference type="Reactome" id="R-HSA-977225">
    <property type="pathway name" value="Amyloid fiber formation"/>
</dbReference>
<dbReference type="Reactome" id="R-HSA-9821002">
    <property type="pathway name" value="Chromatin modifications during the maternal to zygotic transition (MZT)"/>
</dbReference>
<dbReference type="Reactome" id="R-HSA-9841922">
    <property type="pathway name" value="MLL4 and MLL3 complexes regulate expression of PPARG target genes in adipogenesis and hepatic steatosis"/>
</dbReference>
<dbReference type="Reactome" id="R-HSA-9843940">
    <property type="pathway name" value="Regulation of endogenous retroelements by KRAB-ZFP proteins"/>
</dbReference>
<dbReference type="Reactome" id="R-HSA-9843970">
    <property type="pathway name" value="Regulation of endogenous retroelements by the Human Silencing Hub (HUSH) complex"/>
</dbReference>
<dbReference type="Reactome" id="R-HSA-9845323">
    <property type="pathway name" value="Regulation of endogenous retroelements by Piwi-interacting RNAs (piRNAs)"/>
</dbReference>
<dbReference type="SignaLink" id="P04908"/>
<dbReference type="SIGNOR" id="P04908"/>
<dbReference type="BioGRID-ORCS" id="3012">
    <property type="hits" value="129 hits in 1135 CRISPR screens"/>
</dbReference>
<dbReference type="BioGRID-ORCS" id="8335">
    <property type="hits" value="287 hits in 1070 CRISPR screens"/>
</dbReference>
<dbReference type="CD-CODE" id="91857CE7">
    <property type="entry name" value="Nucleolus"/>
</dbReference>
<dbReference type="EvolutionaryTrace" id="P04908"/>
<dbReference type="GeneWiki" id="HIST1H2AB"/>
<dbReference type="GeneWiki" id="HIST1H2AE"/>
<dbReference type="Pharos" id="P04908">
    <property type="development level" value="Tbio"/>
</dbReference>
<dbReference type="PRO" id="PR:P04908"/>
<dbReference type="Proteomes" id="UP000005640">
    <property type="component" value="Chromosome 6"/>
</dbReference>
<dbReference type="RNAct" id="P04908">
    <property type="molecule type" value="protein"/>
</dbReference>
<dbReference type="Bgee" id="ENSG00000277075">
    <property type="expression patterns" value="Expressed in calcaneal tendon and 113 other cell types or tissues"/>
</dbReference>
<dbReference type="ExpressionAtlas" id="P04908">
    <property type="expression patterns" value="baseline and differential"/>
</dbReference>
<dbReference type="GO" id="GO:0043505">
    <property type="term" value="C:CENP-A containing nucleosome"/>
    <property type="evidence" value="ECO:0000353"/>
    <property type="project" value="ComplexPortal"/>
</dbReference>
<dbReference type="GO" id="GO:0070062">
    <property type="term" value="C:extracellular exosome"/>
    <property type="evidence" value="ECO:0007005"/>
    <property type="project" value="UniProtKB"/>
</dbReference>
<dbReference type="GO" id="GO:0000786">
    <property type="term" value="C:nucleosome"/>
    <property type="evidence" value="ECO:0000353"/>
    <property type="project" value="ComplexPortal"/>
</dbReference>
<dbReference type="GO" id="GO:0005634">
    <property type="term" value="C:nucleus"/>
    <property type="evidence" value="ECO:0000314"/>
    <property type="project" value="UniProtKB"/>
</dbReference>
<dbReference type="GO" id="GO:0003677">
    <property type="term" value="F:DNA binding"/>
    <property type="evidence" value="ECO:0000303"/>
    <property type="project" value="UniProtKB"/>
</dbReference>
<dbReference type="GO" id="GO:0046982">
    <property type="term" value="F:protein heterodimerization activity"/>
    <property type="evidence" value="ECO:0007669"/>
    <property type="project" value="InterPro"/>
</dbReference>
<dbReference type="GO" id="GO:0030527">
    <property type="term" value="F:structural constituent of chromatin"/>
    <property type="evidence" value="ECO:0000318"/>
    <property type="project" value="GO_Central"/>
</dbReference>
<dbReference type="GO" id="GO:0006325">
    <property type="term" value="P:chromatin organization"/>
    <property type="evidence" value="ECO:0000303"/>
    <property type="project" value="ComplexPortal"/>
</dbReference>
<dbReference type="GO" id="GO:0031507">
    <property type="term" value="P:heterochromatin formation"/>
    <property type="evidence" value="ECO:0000318"/>
    <property type="project" value="GO_Central"/>
</dbReference>
<dbReference type="GO" id="GO:0008285">
    <property type="term" value="P:negative regulation of cell population proliferation"/>
    <property type="evidence" value="ECO:0000315"/>
    <property type="project" value="UniProtKB"/>
</dbReference>
<dbReference type="GO" id="GO:0061644">
    <property type="term" value="P:protein localization to CENP-A containing chromatin"/>
    <property type="evidence" value="ECO:0000303"/>
    <property type="project" value="ComplexPortal"/>
</dbReference>
<dbReference type="CDD" id="cd00074">
    <property type="entry name" value="HFD_H2A"/>
    <property type="match status" value="1"/>
</dbReference>
<dbReference type="DisProt" id="DP01157"/>
<dbReference type="FunFam" id="1.10.20.10:FF:000103">
    <property type="entry name" value="Histone H2A type 1"/>
    <property type="match status" value="1"/>
</dbReference>
<dbReference type="Gene3D" id="1.10.20.10">
    <property type="entry name" value="Histone, subunit A"/>
    <property type="match status" value="1"/>
</dbReference>
<dbReference type="IDEAL" id="IID00016"/>
<dbReference type="InterPro" id="IPR009072">
    <property type="entry name" value="Histone-fold"/>
</dbReference>
<dbReference type="InterPro" id="IPR002119">
    <property type="entry name" value="Histone_H2A"/>
</dbReference>
<dbReference type="InterPro" id="IPR007125">
    <property type="entry name" value="Histone_H2A/H2B/H3"/>
</dbReference>
<dbReference type="InterPro" id="IPR032454">
    <property type="entry name" value="Histone_H2A_C"/>
</dbReference>
<dbReference type="InterPro" id="IPR032458">
    <property type="entry name" value="Histone_H2A_CS"/>
</dbReference>
<dbReference type="PANTHER" id="PTHR23430">
    <property type="entry name" value="HISTONE H2A"/>
    <property type="match status" value="1"/>
</dbReference>
<dbReference type="Pfam" id="PF00125">
    <property type="entry name" value="Histone"/>
    <property type="match status" value="1"/>
</dbReference>
<dbReference type="Pfam" id="PF16211">
    <property type="entry name" value="Histone_H2A_C"/>
    <property type="match status" value="1"/>
</dbReference>
<dbReference type="PRINTS" id="PR00620">
    <property type="entry name" value="HISTONEH2A"/>
</dbReference>
<dbReference type="SMART" id="SM00414">
    <property type="entry name" value="H2A"/>
    <property type="match status" value="1"/>
</dbReference>
<dbReference type="SUPFAM" id="SSF47113">
    <property type="entry name" value="Histone-fold"/>
    <property type="match status" value="1"/>
</dbReference>
<dbReference type="PROSITE" id="PS00046">
    <property type="entry name" value="HISTONE_H2A"/>
    <property type="match status" value="1"/>
</dbReference>
<reference key="1">
    <citation type="journal article" date="1983" name="Nucleic Acids Res.">
        <title>The primary structure and expression of four cloned human histone genes.</title>
        <authorList>
            <person name="Zhong R."/>
            <person name="Roeder R.G."/>
            <person name="Heintz N."/>
        </authorList>
    </citation>
    <scope>NUCLEOTIDE SEQUENCE [GENOMIC DNA] (H2AC4)</scope>
</reference>
<reference key="2">
    <citation type="journal article" date="1991" name="Genomics">
        <title>Isolation and characterization of two human H1 histone genes within clusters of core histone genes.</title>
        <authorList>
            <person name="Albig W."/>
            <person name="Kardalinou E."/>
            <person name="Drabent B."/>
            <person name="Zimmer A."/>
            <person name="Doenecke D."/>
        </authorList>
    </citation>
    <scope>NUCLEOTIDE SEQUENCE [GENOMIC DNA] (H2AC8)</scope>
</reference>
<reference key="3">
    <citation type="journal article" date="1997" name="Hum. Genet.">
        <title>The human histone gene cluster at the D6S105 locus.</title>
        <authorList>
            <person name="Albig W."/>
            <person name="Doenecke D."/>
        </authorList>
    </citation>
    <scope>NUCLEOTIDE SEQUENCE [GENOMIC DNA] (H2AC8)</scope>
</reference>
<reference key="4">
    <citation type="journal article" date="2002" name="Genomics">
        <title>The human and mouse replication-dependent histone genes.</title>
        <authorList>
            <person name="Marzluff W.F."/>
            <person name="Gongidi P."/>
            <person name="Woods K.R."/>
            <person name="Jin J."/>
            <person name="Maltais L.J."/>
        </authorList>
    </citation>
    <scope>NUCLEOTIDE SEQUENCE [GENOMIC DNA] (H2AC4 AND H2AC8)</scope>
</reference>
<reference key="5">
    <citation type="journal article" date="2003" name="Nature">
        <title>The DNA sequence and analysis of human chromosome 6.</title>
        <authorList>
            <person name="Mungall A.J."/>
            <person name="Palmer S.A."/>
            <person name="Sims S.K."/>
            <person name="Edwards C.A."/>
            <person name="Ashurst J.L."/>
            <person name="Wilming L."/>
            <person name="Jones M.C."/>
            <person name="Horton R."/>
            <person name="Hunt S.E."/>
            <person name="Scott C.E."/>
            <person name="Gilbert J.G.R."/>
            <person name="Clamp M.E."/>
            <person name="Bethel G."/>
            <person name="Milne S."/>
            <person name="Ainscough R."/>
            <person name="Almeida J.P."/>
            <person name="Ambrose K.D."/>
            <person name="Andrews T.D."/>
            <person name="Ashwell R.I.S."/>
            <person name="Babbage A.K."/>
            <person name="Bagguley C.L."/>
            <person name="Bailey J."/>
            <person name="Banerjee R."/>
            <person name="Barker D.J."/>
            <person name="Barlow K.F."/>
            <person name="Bates K."/>
            <person name="Beare D.M."/>
            <person name="Beasley H."/>
            <person name="Beasley O."/>
            <person name="Bird C.P."/>
            <person name="Blakey S.E."/>
            <person name="Bray-Allen S."/>
            <person name="Brook J."/>
            <person name="Brown A.J."/>
            <person name="Brown J.Y."/>
            <person name="Burford D.C."/>
            <person name="Burrill W."/>
            <person name="Burton J."/>
            <person name="Carder C."/>
            <person name="Carter N.P."/>
            <person name="Chapman J.C."/>
            <person name="Clark S.Y."/>
            <person name="Clark G."/>
            <person name="Clee C.M."/>
            <person name="Clegg S."/>
            <person name="Cobley V."/>
            <person name="Collier R.E."/>
            <person name="Collins J.E."/>
            <person name="Colman L.K."/>
            <person name="Corby N.R."/>
            <person name="Coville G.J."/>
            <person name="Culley K.M."/>
            <person name="Dhami P."/>
            <person name="Davies J."/>
            <person name="Dunn M."/>
            <person name="Earthrowl M.E."/>
            <person name="Ellington A.E."/>
            <person name="Evans K.A."/>
            <person name="Faulkner L."/>
            <person name="Francis M.D."/>
            <person name="Frankish A."/>
            <person name="Frankland J."/>
            <person name="French L."/>
            <person name="Garner P."/>
            <person name="Garnett J."/>
            <person name="Ghori M.J."/>
            <person name="Gilby L.M."/>
            <person name="Gillson C.J."/>
            <person name="Glithero R.J."/>
            <person name="Grafham D.V."/>
            <person name="Grant M."/>
            <person name="Gribble S."/>
            <person name="Griffiths C."/>
            <person name="Griffiths M.N.D."/>
            <person name="Hall R."/>
            <person name="Halls K.S."/>
            <person name="Hammond S."/>
            <person name="Harley J.L."/>
            <person name="Hart E.A."/>
            <person name="Heath P.D."/>
            <person name="Heathcott R."/>
            <person name="Holmes S.J."/>
            <person name="Howden P.J."/>
            <person name="Howe K.L."/>
            <person name="Howell G.R."/>
            <person name="Huckle E."/>
            <person name="Humphray S.J."/>
            <person name="Humphries M.D."/>
            <person name="Hunt A.R."/>
            <person name="Johnson C.M."/>
            <person name="Joy A.A."/>
            <person name="Kay M."/>
            <person name="Keenan S.J."/>
            <person name="Kimberley A.M."/>
            <person name="King A."/>
            <person name="Laird G.K."/>
            <person name="Langford C."/>
            <person name="Lawlor S."/>
            <person name="Leongamornlert D.A."/>
            <person name="Leversha M."/>
            <person name="Lloyd C.R."/>
            <person name="Lloyd D.M."/>
            <person name="Loveland J.E."/>
            <person name="Lovell J."/>
            <person name="Martin S."/>
            <person name="Mashreghi-Mohammadi M."/>
            <person name="Maslen G.L."/>
            <person name="Matthews L."/>
            <person name="McCann O.T."/>
            <person name="McLaren S.J."/>
            <person name="McLay K."/>
            <person name="McMurray A."/>
            <person name="Moore M.J.F."/>
            <person name="Mullikin J.C."/>
            <person name="Niblett D."/>
            <person name="Nickerson T."/>
            <person name="Novik K.L."/>
            <person name="Oliver K."/>
            <person name="Overton-Larty E.K."/>
            <person name="Parker A."/>
            <person name="Patel R."/>
            <person name="Pearce A.V."/>
            <person name="Peck A.I."/>
            <person name="Phillimore B.J.C.T."/>
            <person name="Phillips S."/>
            <person name="Plumb R.W."/>
            <person name="Porter K.M."/>
            <person name="Ramsey Y."/>
            <person name="Ranby S.A."/>
            <person name="Rice C.M."/>
            <person name="Ross M.T."/>
            <person name="Searle S.M."/>
            <person name="Sehra H.K."/>
            <person name="Sheridan E."/>
            <person name="Skuce C.D."/>
            <person name="Smith S."/>
            <person name="Smith M."/>
            <person name="Spraggon L."/>
            <person name="Squares S.L."/>
            <person name="Steward C.A."/>
            <person name="Sycamore N."/>
            <person name="Tamlyn-Hall G."/>
            <person name="Tester J."/>
            <person name="Theaker A.J."/>
            <person name="Thomas D.W."/>
            <person name="Thorpe A."/>
            <person name="Tracey A."/>
            <person name="Tromans A."/>
            <person name="Tubby B."/>
            <person name="Wall M."/>
            <person name="Wallis J.M."/>
            <person name="West A.P."/>
            <person name="White S.S."/>
            <person name="Whitehead S.L."/>
            <person name="Whittaker H."/>
            <person name="Wild A."/>
            <person name="Willey D.J."/>
            <person name="Wilmer T.E."/>
            <person name="Wood J.M."/>
            <person name="Wray P.W."/>
            <person name="Wyatt J.C."/>
            <person name="Young L."/>
            <person name="Younger R.M."/>
            <person name="Bentley D.R."/>
            <person name="Coulson A."/>
            <person name="Durbin R.M."/>
            <person name="Hubbard T."/>
            <person name="Sulston J.E."/>
            <person name="Dunham I."/>
            <person name="Rogers J."/>
            <person name="Beck S."/>
        </authorList>
    </citation>
    <scope>NUCLEOTIDE SEQUENCE [LARGE SCALE GENOMIC DNA]</scope>
</reference>
<reference key="6">
    <citation type="journal article" date="2004" name="Genome Res.">
        <title>The status, quality, and expansion of the NIH full-length cDNA project: the Mammalian Gene Collection (MGC).</title>
        <authorList>
            <consortium name="The MGC Project Team"/>
        </authorList>
    </citation>
    <scope>NUCLEOTIDE SEQUENCE [LARGE SCALE MRNA] (H2AC8)</scope>
    <source>
        <tissue>Liver</tissue>
    </source>
</reference>
<reference key="7">
    <citation type="journal article" date="2004" name="Genes Dev.">
        <title>Nucleosomal histone kinase-1 phosphorylates H2A Thr 119 during mitosis in the early Drosophila embryo.</title>
        <authorList>
            <person name="Aihara H."/>
            <person name="Nakagawa T."/>
            <person name="Yasui K."/>
            <person name="Ohta T."/>
            <person name="Hirose S."/>
            <person name="Dhomae N."/>
            <person name="Takio K."/>
            <person name="Kaneko M."/>
            <person name="Takeshima Y."/>
            <person name="Muramatsu M."/>
            <person name="Ito T."/>
        </authorList>
    </citation>
    <scope>PHOSPHORYLATION AT THR-121</scope>
</reference>
<reference key="8">
    <citation type="journal article" date="2004" name="J. Biol. Chem.">
        <title>Phosphorylation of histone H2A inhibits transcription on chromatin templates.</title>
        <authorList>
            <person name="Zhang Y."/>
            <person name="Griffin K."/>
            <person name="Mondal N."/>
            <person name="Parvin J.D."/>
        </authorList>
    </citation>
    <scope>PHOSPHORYLATION AT SER-2</scope>
    <scope>MUTAGENESIS OF SER-2</scope>
</reference>
<reference key="9">
    <citation type="journal article" date="2004" name="Nature">
        <title>Role of histone H2A ubiquitination in Polycomb silencing.</title>
        <authorList>
            <person name="Wang H."/>
            <person name="Wang L."/>
            <person name="Erdjument-Bromage H."/>
            <person name="Vidal M."/>
            <person name="Tempst P."/>
            <person name="Jones R.S."/>
            <person name="Zhang Y."/>
        </authorList>
    </citation>
    <scope>UBIQUITINATION AT LYS-120</scope>
</reference>
<reference key="10">
    <citation type="journal article" date="2002" name="J. Biol. Chem.">
        <title>Global regulation of post-translational modifications on core histones.</title>
        <authorList>
            <person name="Galasinski S.C."/>
            <person name="Louie D.F."/>
            <person name="Gloor K.K."/>
            <person name="Resing K.A."/>
            <person name="Ahn N.G."/>
        </authorList>
    </citation>
    <scope>IDENTIFICATION BY MASS SPECTROMETRY</scope>
    <scope>PHOSPHORYLATION AT SER-2</scope>
    <scope>ACETYLATION AT SER-2</scope>
</reference>
<reference key="11">
    <citation type="journal article" date="2005" name="Biochemistry">
        <title>Deimination of histone H2A and H4 at arginine 3 in HL-60 granulocytes.</title>
        <authorList>
            <person name="Hagiwara T."/>
            <person name="Hidaka Y."/>
            <person name="Yamada M."/>
        </authorList>
    </citation>
    <scope>ACETYLATION AT SER-2</scope>
    <scope>CITRULLINATION AT ARG-4</scope>
    <scope>IDENTIFICATION BY MASS SPECTROMETRY</scope>
</reference>
<reference key="12">
    <citation type="journal article" date="2005" name="Mol. Cell">
        <title>Role of Bmi-1 and Ring1A in H2A ubiquitylation and Hox gene silencing.</title>
        <authorList>
            <person name="Cao R."/>
            <person name="Tsukada Y."/>
            <person name="Zhang Y."/>
        </authorList>
    </citation>
    <scope>UBIQUITINATION AT LYS-120</scope>
</reference>
<reference key="13">
    <citation type="journal article" date="2006" name="Genes Dev.">
        <title>DNA damage triggers nucleotide excision repair-dependent monoubiquitylation of histone H2A.</title>
        <authorList>
            <person name="Bergink S."/>
            <person name="Salomons F.A."/>
            <person name="Hoogstraten D."/>
            <person name="Groothuis T.A.M."/>
            <person name="de Waard H."/>
            <person name="Wu J."/>
            <person name="Yuan L."/>
            <person name="Citterio E."/>
            <person name="Houtsmuller A.B."/>
            <person name="Neefjes J."/>
            <person name="Hoeijmakers J.H.J."/>
            <person name="Vermeulen W."/>
            <person name="Dantuma N.P."/>
        </authorList>
    </citation>
    <scope>UBIQUITINATION AT LYS-120</scope>
</reference>
<reference key="14">
    <citation type="journal article" date="2006" name="J. Proteome Res.">
        <title>Precise characterization of human histones in the H2A gene family by top down mass spectrometry.</title>
        <authorList>
            <person name="Boyne M.T. II"/>
            <person name="Pesavento J.J."/>
            <person name="Mizzen C.A."/>
            <person name="Kelleher N.L."/>
        </authorList>
    </citation>
    <scope>MASS SPECTROMETRY</scope>
    <scope>ACETYLATION AT SER-2</scope>
</reference>
<reference key="15">
    <citation type="journal article" date="2007" name="Cell">
        <title>RNF8 ubiquitylates histones at DNA double-strand breaks and promotes assembly of repair proteins.</title>
        <authorList>
            <person name="Mailand N."/>
            <person name="Bekker-Jensen S."/>
            <person name="Faustrup H."/>
            <person name="Melander F."/>
            <person name="Bartek J."/>
            <person name="Lukas C."/>
            <person name="Lukas J."/>
        </authorList>
    </citation>
    <scope>UBIQUITINATION</scope>
</reference>
<reference key="16">
    <citation type="journal article" date="2007" name="Cell">
        <title>RNF8 transduces the DNA-damage signal via histone ubiquitylation and checkpoint protein assembly.</title>
        <authorList>
            <person name="Huen M.S.Y."/>
            <person name="Grant R."/>
            <person name="Manke I."/>
            <person name="Minn K."/>
            <person name="Yu X."/>
            <person name="Yaffe M.B."/>
            <person name="Chen J."/>
        </authorList>
    </citation>
    <scope>UBIQUITINATION</scope>
</reference>
<reference key="17">
    <citation type="journal article" date="2009" name="Cell">
        <title>The RIDDLE syndrome protein mediates a ubiquitin-dependent signaling cascade at sites of DNA damage.</title>
        <authorList>
            <person name="Stewart G.S."/>
            <person name="Panier S."/>
            <person name="Townsend K."/>
            <person name="Al-Hakim A.K."/>
            <person name="Kolas N.K."/>
            <person name="Miller E.S."/>
            <person name="Nakada S."/>
            <person name="Ylanko J."/>
            <person name="Olivarius S."/>
            <person name="Mendez M."/>
            <person name="Oldreive C."/>
            <person name="Wildenhain J."/>
            <person name="Tagliaferro A."/>
            <person name="Pelletier L."/>
            <person name="Taubenheim N."/>
            <person name="Durandy A."/>
            <person name="Byrd P.J."/>
            <person name="Stankovic T."/>
            <person name="Taylor A.M.R."/>
            <person name="Durocher D."/>
        </authorList>
    </citation>
    <scope>UBIQUITINATION</scope>
</reference>
<reference key="18">
    <citation type="journal article" date="2009" name="Cell">
        <title>RNF168 binds and amplifies ubiquitin conjugates on damaged chromosomes to allow accumulation of repair proteins.</title>
        <authorList>
            <person name="Doil C."/>
            <person name="Mailand N."/>
            <person name="Bekker-Jensen S."/>
            <person name="Menard P."/>
            <person name="Larsen D.H."/>
            <person name="Pepperkok R."/>
            <person name="Ellenberg J."/>
            <person name="Panier S."/>
            <person name="Durocher D."/>
            <person name="Bartek J."/>
            <person name="Lukas J."/>
            <person name="Lukas C."/>
        </authorList>
    </citation>
    <scope>UBIQUITINATION</scope>
</reference>
<reference key="19">
    <citation type="journal article" date="2011" name="Cell">
        <title>Identification of 67 histone marks and histone lysine crotonylation as a new type of histone modification.</title>
        <authorList>
            <person name="Tan M."/>
            <person name="Luo H."/>
            <person name="Lee S."/>
            <person name="Jin F."/>
            <person name="Yang J.S."/>
            <person name="Montellier E."/>
            <person name="Buchou T."/>
            <person name="Cheng Z."/>
            <person name="Rousseaux S."/>
            <person name="Rajagopal N."/>
            <person name="Lu Z."/>
            <person name="Ye Z."/>
            <person name="Zhu Q."/>
            <person name="Wysocka J."/>
            <person name="Ye Y."/>
            <person name="Khochbin S."/>
            <person name="Ren B."/>
            <person name="Zhao Y."/>
        </authorList>
    </citation>
    <scope>CROTONYLATION AT LYS-37; LYS-119; LYS-120 AND LYS-126</scope>
</reference>
<reference key="20">
    <citation type="journal article" date="2012" name="Cell">
        <title>RNF168 ubiquitinates K13-15 on H2A/H2AX to drive DNA Damage signaling.</title>
        <authorList>
            <person name="Mattiroli F."/>
            <person name="Vissers J.H."/>
            <person name="van Dijk W.J."/>
            <person name="Ikpa P."/>
            <person name="Citterio E."/>
            <person name="Vermeulen W."/>
            <person name="Marteijn J.A."/>
            <person name="Sixma T.K."/>
        </authorList>
    </citation>
    <scope>UBIQUITINATION AT LYS-14 AND LYS-16 BY RNF168</scope>
</reference>
<reference key="21">
    <citation type="journal article" date="2012" name="Cell Cycle">
        <title>A novel ubiquitin mark at the N-terminal tail of histone H2As targeted by RNF168 ubiquitin ligase.</title>
        <authorList>
            <person name="Gatti M."/>
            <person name="Pinato S."/>
            <person name="Maspero E."/>
            <person name="Soffientini P."/>
            <person name="Polo S."/>
            <person name="Penengo L."/>
        </authorList>
    </citation>
    <scope>UBIQUITINATION AT LYS-14 AND LYS-16 BY RNF168</scope>
</reference>
<reference key="22">
    <citation type="journal article" date="2012" name="Mol. Cell. Proteomics">
        <title>Lysine succinylation and lysine malonylation in histones.</title>
        <authorList>
            <person name="Xie Z."/>
            <person name="Dai J."/>
            <person name="Dai L."/>
            <person name="Tan M."/>
            <person name="Cheng Z."/>
            <person name="Wu Y."/>
            <person name="Boeke J.D."/>
            <person name="Zhao Y."/>
        </authorList>
    </citation>
    <scope>SUCCINYLATION AT LYS-10 AND LYS-96</scope>
</reference>
<reference key="23">
    <citation type="journal article" date="2013" name="Mol. Cell">
        <title>VprBP has intrinsic kinase activity targeting histone H2A and represses gene transcription.</title>
        <authorList>
            <person name="Kim K."/>
            <person name="Kim J.M."/>
            <person name="Kim J.S."/>
            <person name="Choi J."/>
            <person name="Lee Y.S."/>
            <person name="Neamati N."/>
            <person name="Song J.S."/>
            <person name="Heo K."/>
            <person name="An W."/>
        </authorList>
    </citation>
    <scope>PHOSPHORYLATION AT THR-121</scope>
</reference>
<reference key="24">
    <citation type="journal article" date="2014" name="Nat. Chem. Biol.">
        <title>Lysine 2-hydroxyisobutyrylation is a widely distributed active histone mark.</title>
        <authorList>
            <person name="Dai L."/>
            <person name="Peng C."/>
            <person name="Montellier E."/>
            <person name="Lu Z."/>
            <person name="Chen Y."/>
            <person name="Ishii H."/>
            <person name="Debernardi A."/>
            <person name="Buchou T."/>
            <person name="Rousseaux S."/>
            <person name="Jin F."/>
            <person name="Sabari B.R."/>
            <person name="Deng Z."/>
            <person name="Allis C.D."/>
            <person name="Ren B."/>
            <person name="Khochbin S."/>
            <person name="Zhao Y."/>
        </authorList>
    </citation>
    <scope>HYDROXYBUTYRYLATION AT LYS-6; LYS-10; LYS-37; LYS-75; LYS-76; LYS-96 AND LYS-119</scope>
</reference>
<reference key="25">
    <citation type="journal article" date="2014" name="Nature">
        <title>Glutamine methylation in histone H2A is an RNA-polymerase-I-dedicated modification.</title>
        <authorList>
            <person name="Tessarz P."/>
            <person name="Santos-Rosa H."/>
            <person name="Robson S.C."/>
            <person name="Sylvestersen K.B."/>
            <person name="Nelson C.J."/>
            <person name="Nielsen M.L."/>
            <person name="Kouzarides T."/>
        </authorList>
    </citation>
    <scope>METHYLATION AT GLN-105</scope>
</reference>
<reference key="26">
    <citation type="journal article" date="2014" name="Nature">
        <title>TRIM37 is a new histone H2A ubiquitin ligase and breast cancer oncoprotein.</title>
        <authorList>
            <person name="Bhatnagar S."/>
            <person name="Gazin C."/>
            <person name="Chamberlain L."/>
            <person name="Ou J."/>
            <person name="Zhu X."/>
            <person name="Tushir J.S."/>
            <person name="Virbasius C.M."/>
            <person name="Lin L."/>
            <person name="Zhu L.J."/>
            <person name="Wajapeyee N."/>
            <person name="Green M.R."/>
        </authorList>
    </citation>
    <scope>UBIQUITINATION AT LYS-120</scope>
</reference>
<reference key="27">
    <citation type="journal article" date="2016" name="Genes Dev.">
        <title>USP51 deubiquitylates H2AK13,15ub and regulates DNA damage response.</title>
        <authorList>
            <person name="Wang Z."/>
            <person name="Zhang H."/>
            <person name="Liu J."/>
            <person name="Cheruiyot A."/>
            <person name="Lee J.H."/>
            <person name="Ordog T."/>
            <person name="Lou Z."/>
            <person name="You Z."/>
            <person name="Zhang Z."/>
        </authorList>
    </citation>
    <scope>DEUBIQUITINATION AT LYS-14 AND LYS-16 BY USP51</scope>
</reference>
<reference key="28">
    <citation type="journal article" date="2016" name="Mol. Cell">
        <title>Metabolic regulation of gene expression by histone lysine beta-hydroxybutyrylation.</title>
        <authorList>
            <person name="Xie Z."/>
            <person name="Zhang D."/>
            <person name="Chung D."/>
            <person name="Tang Z."/>
            <person name="Huang H."/>
            <person name="Dai L."/>
            <person name="Qi S."/>
            <person name="Li J."/>
            <person name="Colak G."/>
            <person name="Chen Y."/>
            <person name="Xia C."/>
            <person name="Peng C."/>
            <person name="Ruan H."/>
            <person name="Kirkey M."/>
            <person name="Wang D."/>
            <person name="Jensen L.M."/>
            <person name="Kwon O.K."/>
            <person name="Lee S."/>
            <person name="Pletcher S.D."/>
            <person name="Tan M."/>
            <person name="Lombard D.B."/>
            <person name="White K.P."/>
            <person name="Zhao H."/>
            <person name="Li J."/>
            <person name="Roeder R.G."/>
            <person name="Yang X."/>
            <person name="Zhao Y."/>
        </authorList>
    </citation>
    <scope>HYDROXYBUTYRYLATION AT LYS-10; LYS-14; LYS-37; LYS-96 AND LYS-119</scope>
</reference>
<reference key="29">
    <citation type="journal article" date="2019" name="Mol. Cell">
        <title>Glutarylation of histone H4 lysine 91 regulates chromatin dynamics.</title>
        <authorList>
            <person name="Bao X."/>
            <person name="Liu Z."/>
            <person name="Zhang W."/>
            <person name="Gladysz K."/>
            <person name="Fung Y.M.E."/>
            <person name="Tian G."/>
            <person name="Xiong Y."/>
            <person name="Wong J.W.H."/>
            <person name="Yuen K.W.Y."/>
            <person name="Li X.D."/>
        </authorList>
    </citation>
    <scope>GLUTARYLATION AT LYS-96; LYS-119; LYS-120 AND LYS-126</scope>
</reference>
<reference evidence="31" key="30">
    <citation type="journal article" date="2016" name="Nucleic Acids Res.">
        <title>Structure and function of human histone H3.Y nucleosome.</title>
        <authorList>
            <person name="Kujirai T."/>
            <person name="Horikoshi N."/>
            <person name="Sato K."/>
            <person name="Maehara K."/>
            <person name="Machida S."/>
            <person name="Osakabe A."/>
            <person name="Kimura H."/>
            <person name="Ohkawa Y."/>
            <person name="Kurumizaka H."/>
        </authorList>
    </citation>
    <scope>X-RAY CRYSTALLOGRAPHY (2.80 ANGSTROMS) IN COMPLEX WITH H2B; H3.Y AND H4</scope>
</reference>
<reference evidence="33 34" key="31">
    <citation type="journal article" date="2020" name="Cell Res.">
        <title>Structural basis for nucleosome-mediated inhibition of cGAS activity.</title>
        <authorList>
            <person name="Cao D."/>
            <person name="Han X."/>
            <person name="Fan X."/>
            <person name="Xu R.M."/>
            <person name="Zhang X."/>
        </authorList>
    </citation>
    <scope>STRUCTURE BY ELECTRON MICROSCOPY (3.80 ANGSTROMS) OF 16-118 IN COMPLEX WITH NUCLEOSOME CORE AND CGAS</scope>
</reference>
<reference evidence="32" key="32">
    <citation type="journal article" date="2020" name="Science">
        <title>Structural basis for the inhibition of cGAS by nucleosomes.</title>
        <authorList>
            <person name="Kujirai T."/>
            <person name="Zierhut C."/>
            <person name="Takizawa Y."/>
            <person name="Kim R."/>
            <person name="Negishi L."/>
            <person name="Uruma N."/>
            <person name="Hirai S."/>
            <person name="Funabiki H."/>
            <person name="Kurumizaka H."/>
        </authorList>
    </citation>
    <scope>STRUCTURE BY ELECTRON MICROSCOPY (3.90 ANGSTROMS) OF 2-130 IN COMPLEX WITH NUCLEOSOME CORE AND CGAS</scope>
</reference>
<name>H2A1B_HUMAN</name>
<accession>P04908</accession>
<accession>P28001</accession>
<accession>Q76P63</accession>
<organism>
    <name type="scientific">Homo sapiens</name>
    <name type="common">Human</name>
    <dbReference type="NCBI Taxonomy" id="9606"/>
    <lineage>
        <taxon>Eukaryota</taxon>
        <taxon>Metazoa</taxon>
        <taxon>Chordata</taxon>
        <taxon>Craniata</taxon>
        <taxon>Vertebrata</taxon>
        <taxon>Euteleostomi</taxon>
        <taxon>Mammalia</taxon>
        <taxon>Eutheria</taxon>
        <taxon>Euarchontoglires</taxon>
        <taxon>Primates</taxon>
        <taxon>Haplorrhini</taxon>
        <taxon>Catarrhini</taxon>
        <taxon>Hominidae</taxon>
        <taxon>Homo</taxon>
    </lineage>
</organism>
<gene>
    <name evidence="30" type="primary">H2AC4</name>
    <name evidence="30" type="synonym">H2AFM</name>
    <name evidence="30" type="synonym">HIST1H2AB</name>
</gene>
<gene>
    <name evidence="29" type="primary">H2AC8</name>
    <name evidence="29" type="synonym">H2AFA</name>
    <name evidence="29" type="synonym">HIST1H2AE</name>
</gene>